<dbReference type="EC" id="1.14.14.1" evidence="3 32"/>
<dbReference type="EC" id="4.2.1.152" evidence="30"/>
<dbReference type="EMBL" id="U03688">
    <property type="protein sequence ID" value="AAA19567.1"/>
    <property type="molecule type" value="mRNA"/>
</dbReference>
<dbReference type="EMBL" id="U56438">
    <property type="protein sequence ID" value="AAC50809.1"/>
    <property type="molecule type" value="Genomic_DNA"/>
</dbReference>
<dbReference type="EMBL" id="AF450132">
    <property type="protein sequence ID" value="AAM50512.1"/>
    <property type="molecule type" value="Genomic_DNA"/>
</dbReference>
<dbReference type="EMBL" id="AF450131">
    <property type="protein sequence ID" value="AAM50512.1"/>
    <property type="status" value="JOINED"/>
    <property type="molecule type" value="Genomic_DNA"/>
</dbReference>
<dbReference type="EMBL" id="BT019979">
    <property type="protein sequence ID" value="AAV38782.1"/>
    <property type="molecule type" value="mRNA"/>
</dbReference>
<dbReference type="EMBL" id="AY393998">
    <property type="protein sequence ID" value="AAQ87875.1"/>
    <property type="molecule type" value="Genomic_DNA"/>
</dbReference>
<dbReference type="EMBL" id="BC012049">
    <property type="protein sequence ID" value="AAH12049.1"/>
    <property type="molecule type" value="mRNA"/>
</dbReference>
<dbReference type="EMBL" id="AF171066">
    <property type="protein sequence ID" value="AAG43404.1"/>
    <property type="molecule type" value="Genomic_DNA"/>
</dbReference>
<dbReference type="CCDS" id="CCDS1793.1"/>
<dbReference type="PIR" id="A54116">
    <property type="entry name" value="A54116"/>
</dbReference>
<dbReference type="RefSeq" id="NP_000095.2">
    <property type="nucleotide sequence ID" value="NM_000104.4"/>
</dbReference>
<dbReference type="PDB" id="3PM0">
    <property type="method" value="X-ray"/>
    <property type="resolution" value="2.70 A"/>
    <property type="chains" value="A=51-543"/>
</dbReference>
<dbReference type="PDB" id="6IQ5">
    <property type="method" value="X-ray"/>
    <property type="resolution" value="3.70 A"/>
    <property type="chains" value="A/B=68-530"/>
</dbReference>
<dbReference type="PDBsum" id="3PM0"/>
<dbReference type="PDBsum" id="6IQ5"/>
<dbReference type="SMR" id="Q16678"/>
<dbReference type="BioGRID" id="107925">
    <property type="interactions" value="18"/>
</dbReference>
<dbReference type="CORUM" id="Q16678"/>
<dbReference type="FunCoup" id="Q16678">
    <property type="interactions" value="896"/>
</dbReference>
<dbReference type="IntAct" id="Q16678">
    <property type="interactions" value="6"/>
</dbReference>
<dbReference type="STRING" id="9606.ENSP00000478561"/>
<dbReference type="BindingDB" id="Q16678"/>
<dbReference type="ChEMBL" id="CHEMBL4878"/>
<dbReference type="DrugBank" id="DB02342">
    <property type="generic name" value="2-Methoxyestradiol"/>
</dbReference>
<dbReference type="DrugBank" id="DB00613">
    <property type="generic name" value="Amodiaquine"/>
</dbReference>
<dbReference type="DrugBank" id="DB07352">
    <property type="generic name" value="Apigenin"/>
</dbReference>
<dbReference type="DrugBank" id="DB06732">
    <property type="generic name" value="beta-Naphthoflavone"/>
</dbReference>
<dbReference type="DrugBank" id="DB00443">
    <property type="generic name" value="Betamethasone"/>
</dbReference>
<dbReference type="DrugBank" id="DB00121">
    <property type="generic name" value="Biotin"/>
</dbReference>
<dbReference type="DrugBank" id="DB01222">
    <property type="generic name" value="Budesonide"/>
</dbReference>
<dbReference type="DrugBank" id="DB00201">
    <property type="generic name" value="Caffeine"/>
</dbReference>
<dbReference type="DrugBank" id="DB09061">
    <property type="generic name" value="Cannabidiol"/>
</dbReference>
<dbReference type="DrugBank" id="DB14737">
    <property type="generic name" value="Cannabinol"/>
</dbReference>
<dbReference type="DrugBank" id="DB15581">
    <property type="generic name" value="Chrysin"/>
</dbReference>
<dbReference type="DrugBank" id="DB17283">
    <property type="generic name" value="Chrysoeriol"/>
</dbReference>
<dbReference type="DrugBank" id="DB01254">
    <property type="generic name" value="Dasatinib"/>
</dbReference>
<dbReference type="DrugBank" id="DB00694">
    <property type="generic name" value="Daunorubicin"/>
</dbReference>
<dbReference type="DrugBank" id="DB11259">
    <property type="generic name" value="Diosmetin"/>
</dbReference>
<dbReference type="DrugBank" id="DB01248">
    <property type="generic name" value="Docetaxel"/>
</dbReference>
<dbReference type="DrugBank" id="DB00997">
    <property type="generic name" value="Doxorubicin"/>
</dbReference>
<dbReference type="DrugBank" id="DB00470">
    <property type="generic name" value="Dronabinol"/>
</dbReference>
<dbReference type="DrugBank" id="DB00530">
    <property type="generic name" value="Erlotinib"/>
</dbReference>
<dbReference type="DrugBank" id="DB00783">
    <property type="generic name" value="Estradiol"/>
</dbReference>
<dbReference type="DrugBank" id="DB13952">
    <property type="generic name" value="Estradiol acetate"/>
</dbReference>
<dbReference type="DrugBank" id="DB13953">
    <property type="generic name" value="Estradiol benzoate"/>
</dbReference>
<dbReference type="DrugBank" id="DB13954">
    <property type="generic name" value="Estradiol cypionate"/>
</dbReference>
<dbReference type="DrugBank" id="DB13955">
    <property type="generic name" value="Estradiol dienanthate"/>
</dbReference>
<dbReference type="DrugBank" id="DB13956">
    <property type="generic name" value="Estradiol valerate"/>
</dbReference>
<dbReference type="DrugBank" id="DB00655">
    <property type="generic name" value="Estrone"/>
</dbReference>
<dbReference type="DrugBank" id="DB07776">
    <property type="generic name" value="Flavone"/>
</dbReference>
<dbReference type="DrugBank" id="DB00499">
    <property type="generic name" value="Flutamide"/>
</dbReference>
<dbReference type="DrugBank" id="DB01645">
    <property type="generic name" value="Genistein"/>
</dbReference>
<dbReference type="DrugBank" id="DB01381">
    <property type="generic name" value="Ginkgo biloba"/>
</dbReference>
<dbReference type="DrugBank" id="DB00741">
    <property type="generic name" value="Hydrocortisone"/>
</dbReference>
<dbReference type="DrugBank" id="DB01064">
    <property type="generic name" value="Isoprenaline"/>
</dbReference>
<dbReference type="DrugBank" id="DB16767">
    <property type="generic name" value="Isorhamnetin"/>
</dbReference>
<dbReference type="DrugBank" id="DB01852">
    <property type="generic name" value="Kaempherol"/>
</dbReference>
<dbReference type="DrugBank" id="DB01026">
    <property type="generic name" value="Ketoconazole"/>
</dbReference>
<dbReference type="DrugBank" id="DB00448">
    <property type="generic name" value="Lansoprazole"/>
</dbReference>
<dbReference type="DrugBank" id="DB14009">
    <property type="generic name" value="Medical Cannabis"/>
</dbReference>
<dbReference type="DrugBank" id="DB01065">
    <property type="generic name" value="Melatonin"/>
</dbReference>
<dbReference type="DrugBank" id="DB00170">
    <property type="generic name" value="Menadione"/>
</dbReference>
<dbReference type="DrugBank" id="DB00959">
    <property type="generic name" value="Methylprednisolone"/>
</dbReference>
<dbReference type="DrugBank" id="DB01204">
    <property type="generic name" value="Mitoxantrone"/>
</dbReference>
<dbReference type="DrugBank" id="DB14011">
    <property type="generic name" value="Nabiximols"/>
</dbReference>
<dbReference type="DrugBank" id="DB03467">
    <property type="generic name" value="Naringenin"/>
</dbReference>
<dbReference type="DrugBank" id="DB00338">
    <property type="generic name" value="Omeprazole"/>
</dbReference>
<dbReference type="DrugBank" id="DB01229">
    <property type="generic name" value="Paclitaxel"/>
</dbReference>
<dbReference type="DrugBank" id="DB14631">
    <property type="generic name" value="Prednisolone phosphate"/>
</dbReference>
<dbReference type="DrugBank" id="DB00635">
    <property type="generic name" value="Prednisone"/>
</dbReference>
<dbReference type="DrugBank" id="DB01087">
    <property type="generic name" value="Primaquine"/>
</dbReference>
<dbReference type="DrugBank" id="DB00396">
    <property type="generic name" value="Progesterone"/>
</dbReference>
<dbReference type="DrugBank" id="DB00818">
    <property type="generic name" value="Propofol"/>
</dbReference>
<dbReference type="DrugBank" id="DB04216">
    <property type="generic name" value="Quercetin"/>
</dbReference>
<dbReference type="DrugBank" id="DB02709">
    <property type="generic name" value="Resveratrol"/>
</dbReference>
<dbReference type="DrugBank" id="DB00675">
    <property type="generic name" value="Tamoxifen"/>
</dbReference>
<dbReference type="DrugBank" id="DB00624">
    <property type="generic name" value="Testosterone"/>
</dbReference>
<dbReference type="DrugBank" id="DB13946">
    <property type="generic name" value="Testosterone undecanoate"/>
</dbReference>
<dbReference type="DrugBank" id="DB00277">
    <property type="generic name" value="Theophylline"/>
</dbReference>
<dbReference type="DrugBank" id="DB12245">
    <property type="generic name" value="Triclabendazole"/>
</dbReference>
<dbReference type="DrugBank" id="DB11155">
    <property type="generic name" value="Triclocarban"/>
</dbReference>
<dbReference type="DrugCentral" id="Q16678"/>
<dbReference type="GuidetoPHARMACOLOGY" id="1320"/>
<dbReference type="SwissLipids" id="SLP:000001331"/>
<dbReference type="GlyGen" id="Q16678">
    <property type="glycosylation" value="1 site, 1 O-linked glycan (1 site)"/>
</dbReference>
<dbReference type="iPTMnet" id="Q16678"/>
<dbReference type="PhosphoSitePlus" id="Q16678"/>
<dbReference type="BioMuta" id="CYP1B1"/>
<dbReference type="DMDM" id="48429256"/>
<dbReference type="jPOST" id="Q16678"/>
<dbReference type="MassIVE" id="Q16678"/>
<dbReference type="PaxDb" id="9606-ENSP00000478561"/>
<dbReference type="PeptideAtlas" id="Q16678"/>
<dbReference type="ProteomicsDB" id="61033"/>
<dbReference type="Antibodypedia" id="29477">
    <property type="antibodies" value="444 antibodies from 36 providers"/>
</dbReference>
<dbReference type="DNASU" id="1545"/>
<dbReference type="Ensembl" id="ENST00000490576.2">
    <property type="protein sequence ID" value="ENSP00000478839.2"/>
    <property type="gene ID" value="ENSG00000138061.13"/>
</dbReference>
<dbReference type="Ensembl" id="ENST00000610745.5">
    <property type="protein sequence ID" value="ENSP00000478561.1"/>
    <property type="gene ID" value="ENSG00000138061.13"/>
</dbReference>
<dbReference type="Ensembl" id="ENST00000614273.1">
    <property type="protein sequence ID" value="ENSP00000483678.1"/>
    <property type="gene ID" value="ENSG00000138061.13"/>
</dbReference>
<dbReference type="Ensembl" id="ENST00000714520.1">
    <property type="protein sequence ID" value="ENSP00000519767.1"/>
    <property type="gene ID" value="ENSG00000138061.13"/>
</dbReference>
<dbReference type="GeneID" id="1545"/>
<dbReference type="KEGG" id="hsa:1545"/>
<dbReference type="MANE-Select" id="ENST00000610745.5">
    <property type="protein sequence ID" value="ENSP00000478561.1"/>
    <property type="RefSeq nucleotide sequence ID" value="NM_000104.4"/>
    <property type="RefSeq protein sequence ID" value="NP_000095.2"/>
</dbReference>
<dbReference type="UCSC" id="uc032njx.2">
    <property type="organism name" value="human"/>
</dbReference>
<dbReference type="AGR" id="HGNC:2597"/>
<dbReference type="CTD" id="1545"/>
<dbReference type="DisGeNET" id="1545"/>
<dbReference type="GeneCards" id="CYP1B1"/>
<dbReference type="GeneReviews" id="CYP1B1"/>
<dbReference type="HGNC" id="HGNC:2597">
    <property type="gene designation" value="CYP1B1"/>
</dbReference>
<dbReference type="HPA" id="ENSG00000138061">
    <property type="expression patterns" value="Low tissue specificity"/>
</dbReference>
<dbReference type="MalaCards" id="CYP1B1"/>
<dbReference type="MIM" id="137750">
    <property type="type" value="phenotype"/>
</dbReference>
<dbReference type="MIM" id="231300">
    <property type="type" value="phenotype"/>
</dbReference>
<dbReference type="MIM" id="601771">
    <property type="type" value="gene"/>
</dbReference>
<dbReference type="MIM" id="617315">
    <property type="type" value="phenotype"/>
</dbReference>
<dbReference type="neXtProt" id="NX_Q16678"/>
<dbReference type="OpenTargets" id="ENSG00000138061"/>
<dbReference type="Orphanet" id="98976">
    <property type="disease" value="Congenital glaucoma"/>
</dbReference>
<dbReference type="Orphanet" id="98977">
    <property type="disease" value="Juvenile glaucoma"/>
</dbReference>
<dbReference type="Orphanet" id="708">
    <property type="disease" value="Peters anomaly"/>
</dbReference>
<dbReference type="PharmGKB" id="PA27094"/>
<dbReference type="VEuPathDB" id="HostDB:ENSG00000138061"/>
<dbReference type="eggNOG" id="KOG0156">
    <property type="taxonomic scope" value="Eukaryota"/>
</dbReference>
<dbReference type="GeneTree" id="ENSGT00950000183037"/>
<dbReference type="HOGENOM" id="CLU_001570_22_0_1"/>
<dbReference type="InParanoid" id="Q16678"/>
<dbReference type="OMA" id="QIRLGNC"/>
<dbReference type="OrthoDB" id="1055148at2759"/>
<dbReference type="PAN-GO" id="Q16678">
    <property type="GO annotations" value="2 GO annotations based on evolutionary models"/>
</dbReference>
<dbReference type="PhylomeDB" id="Q16678"/>
<dbReference type="TreeFam" id="TF105095"/>
<dbReference type="BioCyc" id="MetaCyc:HS06443-MONOMER"/>
<dbReference type="PathwayCommons" id="Q16678"/>
<dbReference type="Reactome" id="R-HSA-211976">
    <property type="pathway name" value="Endogenous sterols"/>
</dbReference>
<dbReference type="Reactome" id="R-HSA-2142670">
    <property type="pathway name" value="Synthesis of epoxy (EET) and dihydroxyeicosatrienoic acids (DHET)"/>
</dbReference>
<dbReference type="Reactome" id="R-HSA-2142816">
    <property type="pathway name" value="Synthesis of (16-20)-hydroxyeicosatetraenoic acids (HETE)"/>
</dbReference>
<dbReference type="Reactome" id="R-HSA-5579000">
    <property type="pathway name" value="Defective CYP1B1 causes Glaucoma"/>
</dbReference>
<dbReference type="SABIO-RK" id="Q16678"/>
<dbReference type="SignaLink" id="Q16678"/>
<dbReference type="SIGNOR" id="Q16678"/>
<dbReference type="UniPathway" id="UPA00383"/>
<dbReference type="UniPathway" id="UPA00912"/>
<dbReference type="BioGRID-ORCS" id="1545">
    <property type="hits" value="12 hits in 1154 CRISPR screens"/>
</dbReference>
<dbReference type="ChiTaRS" id="CYP1B1">
    <property type="organism name" value="human"/>
</dbReference>
<dbReference type="EvolutionaryTrace" id="Q16678"/>
<dbReference type="GeneWiki" id="CYP1B1"/>
<dbReference type="GenomeRNAi" id="1545"/>
<dbReference type="Pharos" id="Q16678">
    <property type="development level" value="Tchem"/>
</dbReference>
<dbReference type="PRO" id="PR:Q16678"/>
<dbReference type="Proteomes" id="UP000005640">
    <property type="component" value="Chromosome 2"/>
</dbReference>
<dbReference type="RNAct" id="Q16678">
    <property type="molecule type" value="protein"/>
</dbReference>
<dbReference type="Bgee" id="ENSG00000138061">
    <property type="expression patterns" value="Expressed in pericardium and 208 other cell types or tissues"/>
</dbReference>
<dbReference type="ExpressionAtlas" id="Q16678">
    <property type="expression patterns" value="baseline and differential"/>
</dbReference>
<dbReference type="GO" id="GO:0005789">
    <property type="term" value="C:endoplasmic reticulum membrane"/>
    <property type="evidence" value="ECO:0000304"/>
    <property type="project" value="Reactome"/>
</dbReference>
<dbReference type="GO" id="GO:0043231">
    <property type="term" value="C:intracellular membrane-bounded organelle"/>
    <property type="evidence" value="ECO:0000318"/>
    <property type="project" value="GO_Central"/>
</dbReference>
<dbReference type="GO" id="GO:0005739">
    <property type="term" value="C:mitochondrion"/>
    <property type="evidence" value="ECO:0000250"/>
    <property type="project" value="UniProtKB"/>
</dbReference>
<dbReference type="GO" id="GO:0101020">
    <property type="term" value="F:estrogen 16-alpha-hydroxylase activity"/>
    <property type="evidence" value="ECO:0000314"/>
    <property type="project" value="UniProtKB"/>
</dbReference>
<dbReference type="GO" id="GO:0101021">
    <property type="term" value="F:estrogen 2-hydroxylase activity"/>
    <property type="evidence" value="ECO:0007669"/>
    <property type="project" value="RHEA"/>
</dbReference>
<dbReference type="GO" id="GO:0020037">
    <property type="term" value="F:heme binding"/>
    <property type="evidence" value="ECO:0000314"/>
    <property type="project" value="UniProtKB"/>
</dbReference>
<dbReference type="GO" id="GO:0106256">
    <property type="term" value="F:hydroperoxy icosatetraenoate dehydratase activity"/>
    <property type="evidence" value="ECO:0007669"/>
    <property type="project" value="UniProtKB-EC"/>
</dbReference>
<dbReference type="GO" id="GO:0005506">
    <property type="term" value="F:iron ion binding"/>
    <property type="evidence" value="ECO:0007669"/>
    <property type="project" value="InterPro"/>
</dbReference>
<dbReference type="GO" id="GO:0004497">
    <property type="term" value="F:monooxygenase activity"/>
    <property type="evidence" value="ECO:0000314"/>
    <property type="project" value="UniProtKB"/>
</dbReference>
<dbReference type="GO" id="GO:0016709">
    <property type="term" value="F:oxidoreductase activity, acting on paired donors, with incorporation or reduction of molecular oxygen, NAD(P)H as one donor, and incorporation of one atom of oxygen"/>
    <property type="evidence" value="ECO:0000304"/>
    <property type="project" value="Reactome"/>
</dbReference>
<dbReference type="GO" id="GO:0016712">
    <property type="term" value="F:oxidoreductase activity, acting on paired donors, with incorporation or reduction of molecular oxygen, reduced flavin or flavoprotein as one donor, and incorporation of one atom of oxygen"/>
    <property type="evidence" value="ECO:0000314"/>
    <property type="project" value="MGI"/>
</dbReference>
<dbReference type="GO" id="GO:0050649">
    <property type="term" value="F:testosterone 6-beta-hydroxylase activity"/>
    <property type="evidence" value="ECO:0007669"/>
    <property type="project" value="RHEA"/>
</dbReference>
<dbReference type="GO" id="GO:0001525">
    <property type="term" value="P:angiogenesis"/>
    <property type="evidence" value="ECO:0007669"/>
    <property type="project" value="Ensembl"/>
</dbReference>
<dbReference type="GO" id="GO:0019369">
    <property type="term" value="P:arachidonate metabolic process"/>
    <property type="evidence" value="ECO:0000314"/>
    <property type="project" value="UniProtKB"/>
</dbReference>
<dbReference type="GO" id="GO:0042537">
    <property type="term" value="P:benzene-containing compound metabolic process"/>
    <property type="evidence" value="ECO:0007669"/>
    <property type="project" value="Ensembl"/>
</dbReference>
<dbReference type="GO" id="GO:0043534">
    <property type="term" value="P:blood vessel endothelial cell migration"/>
    <property type="evidence" value="ECO:0007669"/>
    <property type="project" value="Ensembl"/>
</dbReference>
<dbReference type="GO" id="GO:0048514">
    <property type="term" value="P:blood vessel morphogenesis"/>
    <property type="evidence" value="ECO:0000250"/>
    <property type="project" value="UniProtKB"/>
</dbReference>
<dbReference type="GO" id="GO:0007155">
    <property type="term" value="P:cell adhesion"/>
    <property type="evidence" value="ECO:0000250"/>
    <property type="project" value="UniProtKB"/>
</dbReference>
<dbReference type="GO" id="GO:0070301">
    <property type="term" value="P:cellular response to hydrogen peroxide"/>
    <property type="evidence" value="ECO:0000250"/>
    <property type="project" value="UniProtKB"/>
</dbReference>
<dbReference type="GO" id="GO:0030199">
    <property type="term" value="P:collagen fibril organization"/>
    <property type="evidence" value="ECO:0000250"/>
    <property type="project" value="UniProtKB"/>
</dbReference>
<dbReference type="GO" id="GO:0043542">
    <property type="term" value="P:endothelial cell migration"/>
    <property type="evidence" value="ECO:0000250"/>
    <property type="project" value="UniProtKB"/>
</dbReference>
<dbReference type="GO" id="GO:0071603">
    <property type="term" value="P:endothelial cell-cell adhesion"/>
    <property type="evidence" value="ECO:0007669"/>
    <property type="project" value="Ensembl"/>
</dbReference>
<dbReference type="GO" id="GO:0019373">
    <property type="term" value="P:epoxygenase P450 pathway"/>
    <property type="evidence" value="ECO:0000304"/>
    <property type="project" value="Reactome"/>
</dbReference>
<dbReference type="GO" id="GO:0008210">
    <property type="term" value="P:estrogen metabolic process"/>
    <property type="evidence" value="ECO:0000314"/>
    <property type="project" value="UniProtKB"/>
</dbReference>
<dbReference type="GO" id="GO:0008631">
    <property type="term" value="P:intrinsic apoptotic signaling pathway in response to oxidative stress"/>
    <property type="evidence" value="ECO:0000250"/>
    <property type="project" value="UniProtKB"/>
</dbReference>
<dbReference type="GO" id="GO:0046466">
    <property type="term" value="P:membrane lipid catabolic process"/>
    <property type="evidence" value="ECO:0000250"/>
    <property type="project" value="UniProtKB"/>
</dbReference>
<dbReference type="GO" id="GO:0033629">
    <property type="term" value="P:negative regulation of cell adhesion mediated by integrin"/>
    <property type="evidence" value="ECO:0000250"/>
    <property type="project" value="UniProtKB"/>
</dbReference>
<dbReference type="GO" id="GO:0030336">
    <property type="term" value="P:negative regulation of cell migration"/>
    <property type="evidence" value="ECO:0000250"/>
    <property type="project" value="UniProtKB"/>
</dbReference>
<dbReference type="GO" id="GO:0008285">
    <property type="term" value="P:negative regulation of cell population proliferation"/>
    <property type="evidence" value="ECO:0000250"/>
    <property type="project" value="UniProtKB"/>
</dbReference>
<dbReference type="GO" id="GO:0032088">
    <property type="term" value="P:negative regulation of NF-kappaB transcription factor activity"/>
    <property type="evidence" value="ECO:0000250"/>
    <property type="project" value="UniProtKB"/>
</dbReference>
<dbReference type="GO" id="GO:0006809">
    <property type="term" value="P:nitric oxide biosynthetic process"/>
    <property type="evidence" value="ECO:0000250"/>
    <property type="project" value="UniProtKB"/>
</dbReference>
<dbReference type="GO" id="GO:0097267">
    <property type="term" value="P:omega-hydroxylase P450 pathway"/>
    <property type="evidence" value="ECO:0000304"/>
    <property type="project" value="Reactome"/>
</dbReference>
<dbReference type="GO" id="GO:0045766">
    <property type="term" value="P:positive regulation of angiogenesis"/>
    <property type="evidence" value="ECO:0000250"/>
    <property type="project" value="UniProtKB"/>
</dbReference>
<dbReference type="GO" id="GO:0043065">
    <property type="term" value="P:positive regulation of apoptotic process"/>
    <property type="evidence" value="ECO:0000250"/>
    <property type="project" value="UniProtKB"/>
</dbReference>
<dbReference type="GO" id="GO:0046427">
    <property type="term" value="P:positive regulation of receptor signaling pathway via JAK-STAT"/>
    <property type="evidence" value="ECO:0000250"/>
    <property type="project" value="UniProtKB"/>
</dbReference>
<dbReference type="GO" id="GO:0010575">
    <property type="term" value="P:positive regulation of vascular endothelial growth factor production"/>
    <property type="evidence" value="ECO:0000250"/>
    <property type="project" value="UniProtKB"/>
</dbReference>
<dbReference type="GO" id="GO:2000377">
    <property type="term" value="P:regulation of reactive oxygen species metabolic process"/>
    <property type="evidence" value="ECO:0000250"/>
    <property type="project" value="UniProtKB"/>
</dbReference>
<dbReference type="GO" id="GO:0009636">
    <property type="term" value="P:response to toxic substance"/>
    <property type="evidence" value="ECO:0007669"/>
    <property type="project" value="Ensembl"/>
</dbReference>
<dbReference type="GO" id="GO:0061304">
    <property type="term" value="P:retinal blood vessel morphogenesis"/>
    <property type="evidence" value="ECO:0000250"/>
    <property type="project" value="UniProtKB"/>
</dbReference>
<dbReference type="GO" id="GO:0042574">
    <property type="term" value="P:retinal metabolic process"/>
    <property type="evidence" value="ECO:0000314"/>
    <property type="project" value="UniProtKB"/>
</dbReference>
<dbReference type="GO" id="GO:0042572">
    <property type="term" value="P:retinol metabolic process"/>
    <property type="evidence" value="ECO:0000314"/>
    <property type="project" value="UniProtKB"/>
</dbReference>
<dbReference type="GO" id="GO:0008202">
    <property type="term" value="P:steroid metabolic process"/>
    <property type="evidence" value="ECO:0000314"/>
    <property type="project" value="UniProtKB"/>
</dbReference>
<dbReference type="GO" id="GO:0016125">
    <property type="term" value="P:sterol metabolic process"/>
    <property type="evidence" value="ECO:0000304"/>
    <property type="project" value="Reactome"/>
</dbReference>
<dbReference type="GO" id="GO:0009404">
    <property type="term" value="P:toxin metabolic process"/>
    <property type="evidence" value="ECO:0007669"/>
    <property type="project" value="Ensembl"/>
</dbReference>
<dbReference type="GO" id="GO:0002930">
    <property type="term" value="P:trabecular meshwork development"/>
    <property type="evidence" value="ECO:0000250"/>
    <property type="project" value="UniProtKB"/>
</dbReference>
<dbReference type="GO" id="GO:0006805">
    <property type="term" value="P:xenobiotic metabolic process"/>
    <property type="evidence" value="ECO:0000314"/>
    <property type="project" value="UniProtKB"/>
</dbReference>
<dbReference type="CDD" id="cd20675">
    <property type="entry name" value="CYP1B1-like"/>
    <property type="match status" value="1"/>
</dbReference>
<dbReference type="FunFam" id="1.10.630.10:FF:000002">
    <property type="entry name" value="Cytochrome P450 1A1"/>
    <property type="match status" value="1"/>
</dbReference>
<dbReference type="Gene3D" id="1.10.630.10">
    <property type="entry name" value="Cytochrome P450"/>
    <property type="match status" value="1"/>
</dbReference>
<dbReference type="InterPro" id="IPR001128">
    <property type="entry name" value="Cyt_P450"/>
</dbReference>
<dbReference type="InterPro" id="IPR017972">
    <property type="entry name" value="Cyt_P450_CS"/>
</dbReference>
<dbReference type="InterPro" id="IPR002401">
    <property type="entry name" value="Cyt_P450_E_grp-I"/>
</dbReference>
<dbReference type="InterPro" id="IPR036396">
    <property type="entry name" value="Cyt_P450_sf"/>
</dbReference>
<dbReference type="PANTHER" id="PTHR24289:SF16">
    <property type="entry name" value="CYTOCHROME P450 1B1"/>
    <property type="match status" value="1"/>
</dbReference>
<dbReference type="PANTHER" id="PTHR24289">
    <property type="entry name" value="STEROID 17-ALPHA-HYDROXYLASE/17,20 LYASE"/>
    <property type="match status" value="1"/>
</dbReference>
<dbReference type="Pfam" id="PF00067">
    <property type="entry name" value="p450"/>
    <property type="match status" value="1"/>
</dbReference>
<dbReference type="PRINTS" id="PR00463">
    <property type="entry name" value="EP450I"/>
</dbReference>
<dbReference type="PRINTS" id="PR00385">
    <property type="entry name" value="P450"/>
</dbReference>
<dbReference type="SUPFAM" id="SSF48264">
    <property type="entry name" value="Cytochrome P450"/>
    <property type="match status" value="1"/>
</dbReference>
<dbReference type="PROSITE" id="PS00086">
    <property type="entry name" value="CYTOCHROME_P450"/>
    <property type="match status" value="1"/>
</dbReference>
<protein>
    <recommendedName>
        <fullName evidence="42">Cytochrome P450 1B1</fullName>
        <ecNumber evidence="3 32">1.14.14.1</ecNumber>
    </recommendedName>
    <alternativeName>
        <fullName>CYPIB1</fullName>
    </alternativeName>
    <alternativeName>
        <fullName evidence="50">Hydroperoxy icosatetraenoate dehydratase</fullName>
        <ecNumber evidence="30">4.2.1.152</ecNumber>
    </alternativeName>
</protein>
<evidence type="ECO:0000250" key="1">
    <source>
        <dbReference type="UniProtKB" id="Q64429"/>
    </source>
</evidence>
<evidence type="ECO:0000269" key="2">
    <source>
    </source>
</evidence>
<evidence type="ECO:0000269" key="3">
    <source>
    </source>
</evidence>
<evidence type="ECO:0000269" key="4">
    <source>
    </source>
</evidence>
<evidence type="ECO:0000269" key="5">
    <source>
    </source>
</evidence>
<evidence type="ECO:0000269" key="6">
    <source>
    </source>
</evidence>
<evidence type="ECO:0000269" key="7">
    <source>
    </source>
</evidence>
<evidence type="ECO:0000269" key="8">
    <source>
    </source>
</evidence>
<evidence type="ECO:0000269" key="9">
    <source>
    </source>
</evidence>
<evidence type="ECO:0000269" key="10">
    <source>
    </source>
</evidence>
<evidence type="ECO:0000269" key="11">
    <source>
    </source>
</evidence>
<evidence type="ECO:0000269" key="12">
    <source>
    </source>
</evidence>
<evidence type="ECO:0000269" key="13">
    <source>
    </source>
</evidence>
<evidence type="ECO:0000269" key="14">
    <source>
    </source>
</evidence>
<evidence type="ECO:0000269" key="15">
    <source>
    </source>
</evidence>
<evidence type="ECO:0000269" key="16">
    <source>
    </source>
</evidence>
<evidence type="ECO:0000269" key="17">
    <source>
    </source>
</evidence>
<evidence type="ECO:0000269" key="18">
    <source>
    </source>
</evidence>
<evidence type="ECO:0000269" key="19">
    <source>
    </source>
</evidence>
<evidence type="ECO:0000269" key="20">
    <source>
    </source>
</evidence>
<evidence type="ECO:0000269" key="21">
    <source>
    </source>
</evidence>
<evidence type="ECO:0000269" key="22">
    <source>
    </source>
</evidence>
<evidence type="ECO:0000269" key="23">
    <source>
    </source>
</evidence>
<evidence type="ECO:0000269" key="24">
    <source>
    </source>
</evidence>
<evidence type="ECO:0000269" key="25">
    <source>
    </source>
</evidence>
<evidence type="ECO:0000269" key="26">
    <source>
    </source>
</evidence>
<evidence type="ECO:0000269" key="27">
    <source>
    </source>
</evidence>
<evidence type="ECO:0000269" key="28">
    <source>
    </source>
</evidence>
<evidence type="ECO:0000269" key="29">
    <source>
    </source>
</evidence>
<evidence type="ECO:0000269" key="30">
    <source>
    </source>
</evidence>
<evidence type="ECO:0000269" key="31">
    <source>
    </source>
</evidence>
<evidence type="ECO:0000269" key="32">
    <source>
    </source>
</evidence>
<evidence type="ECO:0000269" key="33">
    <source>
    </source>
</evidence>
<evidence type="ECO:0000269" key="34">
    <source>
    </source>
</evidence>
<evidence type="ECO:0000269" key="35">
    <source>
    </source>
</evidence>
<evidence type="ECO:0000269" key="36">
    <source>
    </source>
</evidence>
<evidence type="ECO:0000269" key="37">
    <source>
    </source>
</evidence>
<evidence type="ECO:0000269" key="38">
    <source>
    </source>
</evidence>
<evidence type="ECO:0000269" key="39">
    <source ref="4"/>
</evidence>
<evidence type="ECO:0000269" key="40">
    <source ref="5"/>
</evidence>
<evidence type="ECO:0000269" key="41">
    <source ref="7"/>
</evidence>
<evidence type="ECO:0000303" key="42">
    <source>
    </source>
</evidence>
<evidence type="ECO:0000303" key="43">
    <source>
    </source>
</evidence>
<evidence type="ECO:0000305" key="44"/>
<evidence type="ECO:0000305" key="45">
    <source>
    </source>
</evidence>
<evidence type="ECO:0000305" key="46">
    <source>
    </source>
</evidence>
<evidence type="ECO:0000305" key="47">
    <source>
    </source>
</evidence>
<evidence type="ECO:0000305" key="48">
    <source>
    </source>
</evidence>
<evidence type="ECO:0000305" key="49">
    <source>
    </source>
</evidence>
<evidence type="ECO:0000305" key="50">
    <source>
    </source>
</evidence>
<evidence type="ECO:0000305" key="51">
    <source>
    </source>
</evidence>
<evidence type="ECO:0000312" key="52">
    <source>
        <dbReference type="HGNC" id="HGNC:2597"/>
    </source>
</evidence>
<evidence type="ECO:0007744" key="53">
    <source>
        <dbReference type="PDB" id="3PM0"/>
    </source>
</evidence>
<evidence type="ECO:0007829" key="54">
    <source>
        <dbReference type="PDB" id="3PM0"/>
    </source>
</evidence>
<proteinExistence type="evidence at protein level"/>
<keyword id="KW-0002">3D-structure</keyword>
<keyword id="KW-0225">Disease variant</keyword>
<keyword id="KW-0256">Endoplasmic reticulum</keyword>
<keyword id="KW-0276">Fatty acid metabolism</keyword>
<keyword id="KW-0955">Glaucoma</keyword>
<keyword id="KW-0349">Heme</keyword>
<keyword id="KW-0408">Iron</keyword>
<keyword id="KW-0443">Lipid metabolism</keyword>
<keyword id="KW-0456">Lyase</keyword>
<keyword id="KW-0472">Membrane</keyword>
<keyword id="KW-0479">Metal-binding</keyword>
<keyword id="KW-0492">Microsome</keyword>
<keyword id="KW-0496">Mitochondrion</keyword>
<keyword id="KW-0503">Monooxygenase</keyword>
<keyword id="KW-0560">Oxidoreductase</keyword>
<keyword id="KW-1059">Peters anomaly</keyword>
<keyword id="KW-1267">Proteomics identification</keyword>
<keyword id="KW-1185">Reference proteome</keyword>
<keyword id="KW-0753">Steroid metabolism</keyword>
<accession>Q16678</accession>
<accession>Q5TZW8</accession>
<accession>Q93089</accession>
<accession>Q9H316</accession>
<comment type="function">
    <text evidence="1 3 5 10 16 20 29 30">A cytochrome P450 monooxygenase involved in the metabolism of various endogenous substrates, including fatty acids, steroid hormones and vitamins (PubMed:10681376, PubMed:11555828, PubMed:12865317, PubMed:15258110, PubMed:20972997). Mechanistically, uses molecular oxygen inserting one oxygen atom into a substrate, and reducing the second into a water molecule, with two electrons provided by NADPH via cytochrome P450 reductase (NADPH--hemoprotein reductase) (PubMed:10681376, PubMed:11555828, PubMed:12865317, PubMed:15258110, PubMed:20972997). Exhibits catalytic activity for the formation of hydroxyestrogens from estrone (E1) and 17beta-estradiol (E2), namely 2- and 4-hydroxy E1 and E2. Displays a predominant hydroxylase activity toward E2 at the C-4 position (PubMed:11555828, PubMed:12865317). Metabolizes testosterone and progesterone to B or D ring hydroxylated metabolites (PubMed:10426814). May act as a major enzyme for all-trans retinoic acid biosynthesis in extrahepatic tissues. Catalyzes two successive oxidative transformation of all-trans retinol to all-trans retinal and then to the active form all-trans retinoic acid (PubMed:10681376, PubMed:15258110). Catalyzes the epoxidation of double bonds of certain PUFA. Converts arachidonic acid toward epoxyeicosatrienoic acid (EpETrE) regioisomers, 8,9-, 11,12-, and 14,15- EpETrE, that function as lipid mediators in the vascular system (PubMed:20972997). Additionally, displays dehydratase activity toward oxygenated eicosanoids hydroperoxyeicosatetraenoates (HpETEs). This activity is independent of cytochrome P450 reductase, NADPH, and O2 (PubMed:21068195). Also involved in the oxidative metabolism of xenobiotics, particularly converting polycyclic aromatic hydrocarbons and heterocyclic aryl amines procarcinogens to DNA-damaging products (PubMed:10426814). Plays an important role in retinal vascular development. Under hyperoxic O2 conditions, promotes retinal angiogenesis and capillary morphogenesis, likely by metabolizing the oxygenated products generated during the oxidative stress. Also, contributes to oxidative homeostasis and ultrastructural organization and function of trabecular meshwork tissue through modulation of POSTN expression (By similarity).</text>
</comment>
<comment type="catalytic activity">
    <reaction evidence="3 32">
        <text>an organic molecule + reduced [NADPH--hemoprotein reductase] + O2 = an alcohol + oxidized [NADPH--hemoprotein reductase] + H2O + H(+)</text>
        <dbReference type="Rhea" id="RHEA:17149"/>
        <dbReference type="Rhea" id="RHEA-COMP:11964"/>
        <dbReference type="Rhea" id="RHEA-COMP:11965"/>
        <dbReference type="ChEBI" id="CHEBI:15377"/>
        <dbReference type="ChEBI" id="CHEBI:15378"/>
        <dbReference type="ChEBI" id="CHEBI:15379"/>
        <dbReference type="ChEBI" id="CHEBI:30879"/>
        <dbReference type="ChEBI" id="CHEBI:57618"/>
        <dbReference type="ChEBI" id="CHEBI:58210"/>
        <dbReference type="ChEBI" id="CHEBI:142491"/>
        <dbReference type="EC" id="1.14.14.1"/>
    </reaction>
    <physiologicalReaction direction="left-to-right" evidence="44">
        <dbReference type="Rhea" id="RHEA:17150"/>
    </physiologicalReaction>
</comment>
<comment type="catalytic activity">
    <reaction evidence="3 10 16 32 34">
        <text>17beta-estradiol + reduced [NADPH--hemoprotein reductase] + O2 = 2-hydroxy-17beta-estradiol + oxidized [NADPH--hemoprotein reductase] + H2O + H(+)</text>
        <dbReference type="Rhea" id="RHEA:47212"/>
        <dbReference type="Rhea" id="RHEA-COMP:11964"/>
        <dbReference type="Rhea" id="RHEA-COMP:11965"/>
        <dbReference type="ChEBI" id="CHEBI:15377"/>
        <dbReference type="ChEBI" id="CHEBI:15378"/>
        <dbReference type="ChEBI" id="CHEBI:15379"/>
        <dbReference type="ChEBI" id="CHEBI:16469"/>
        <dbReference type="ChEBI" id="CHEBI:28744"/>
        <dbReference type="ChEBI" id="CHEBI:57618"/>
        <dbReference type="ChEBI" id="CHEBI:58210"/>
    </reaction>
    <physiologicalReaction direction="left-to-right" evidence="45 47 48 51">
        <dbReference type="Rhea" id="RHEA:47213"/>
    </physiologicalReaction>
</comment>
<comment type="catalytic activity">
    <reaction evidence="3 10 16 32 34">
        <text>17beta-estradiol + reduced [NADPH--hemoprotein reductase] + O2 = 4-hydroxy-17beta-estradiol + oxidized [NADPH--hemoprotein reductase] + H2O + H(+)</text>
        <dbReference type="Rhea" id="RHEA:47280"/>
        <dbReference type="Rhea" id="RHEA-COMP:11964"/>
        <dbReference type="Rhea" id="RHEA-COMP:11965"/>
        <dbReference type="ChEBI" id="CHEBI:15377"/>
        <dbReference type="ChEBI" id="CHEBI:15378"/>
        <dbReference type="ChEBI" id="CHEBI:15379"/>
        <dbReference type="ChEBI" id="CHEBI:16469"/>
        <dbReference type="ChEBI" id="CHEBI:57618"/>
        <dbReference type="ChEBI" id="CHEBI:58210"/>
        <dbReference type="ChEBI" id="CHEBI:62845"/>
    </reaction>
    <physiologicalReaction direction="left-to-right" evidence="45 47 48 51">
        <dbReference type="Rhea" id="RHEA:47281"/>
    </physiologicalReaction>
</comment>
<comment type="catalytic activity">
    <reaction evidence="16 32">
        <text>estrone + reduced [NADPH--hemoprotein reductase] + O2 = 2-hydroxyestrone + oxidized [NADPH--hemoprotein reductase] + H2O + H(+)</text>
        <dbReference type="Rhea" id="RHEA:47208"/>
        <dbReference type="Rhea" id="RHEA-COMP:11964"/>
        <dbReference type="Rhea" id="RHEA-COMP:11965"/>
        <dbReference type="ChEBI" id="CHEBI:1156"/>
        <dbReference type="ChEBI" id="CHEBI:15377"/>
        <dbReference type="ChEBI" id="CHEBI:15378"/>
        <dbReference type="ChEBI" id="CHEBI:15379"/>
        <dbReference type="ChEBI" id="CHEBI:17263"/>
        <dbReference type="ChEBI" id="CHEBI:57618"/>
        <dbReference type="ChEBI" id="CHEBI:58210"/>
    </reaction>
    <physiologicalReaction direction="left-to-right" evidence="48">
        <dbReference type="Rhea" id="RHEA:47209"/>
    </physiologicalReaction>
</comment>
<comment type="catalytic activity">
    <reaction evidence="16 32">
        <text>estrone + reduced [NADPH--hemoprotein reductase] + O2 = 4-hydroxyestrone + oxidized [NADPH--hemoprotein reductase] + H2O + H(+)</text>
        <dbReference type="Rhea" id="RHEA:47292"/>
        <dbReference type="Rhea" id="RHEA-COMP:11964"/>
        <dbReference type="Rhea" id="RHEA-COMP:11965"/>
        <dbReference type="ChEBI" id="CHEBI:15377"/>
        <dbReference type="ChEBI" id="CHEBI:15378"/>
        <dbReference type="ChEBI" id="CHEBI:15379"/>
        <dbReference type="ChEBI" id="CHEBI:17263"/>
        <dbReference type="ChEBI" id="CHEBI:57618"/>
        <dbReference type="ChEBI" id="CHEBI:58210"/>
        <dbReference type="ChEBI" id="CHEBI:87602"/>
    </reaction>
    <physiologicalReaction direction="left-to-right" evidence="48">
        <dbReference type="Rhea" id="RHEA:47293"/>
    </physiologicalReaction>
</comment>
<comment type="catalytic activity">
    <reaction evidence="3">
        <text>testosterone + reduced [NADPH--hemoprotein reductase] + O2 = 6beta,17beta-dihydroxyandrost-4-en-3-one + oxidized [NADPH--hemoprotein reductase] + H2O + H(+)</text>
        <dbReference type="Rhea" id="RHEA:46296"/>
        <dbReference type="Rhea" id="RHEA-COMP:11964"/>
        <dbReference type="Rhea" id="RHEA-COMP:11965"/>
        <dbReference type="ChEBI" id="CHEBI:15377"/>
        <dbReference type="ChEBI" id="CHEBI:15378"/>
        <dbReference type="ChEBI" id="CHEBI:15379"/>
        <dbReference type="ChEBI" id="CHEBI:17347"/>
        <dbReference type="ChEBI" id="CHEBI:34477"/>
        <dbReference type="ChEBI" id="CHEBI:57618"/>
        <dbReference type="ChEBI" id="CHEBI:58210"/>
    </reaction>
    <physiologicalReaction direction="left-to-right" evidence="45">
        <dbReference type="Rhea" id="RHEA:46297"/>
    </physiologicalReaction>
</comment>
<comment type="catalytic activity">
    <reaction evidence="3">
        <text>progesterone + reduced [NADPH--hemoprotein reductase] + O2 = 6beta-hydroxyprogesterone + oxidized [NADPH--hemoprotein reductase] + H2O + H(+)</text>
        <dbReference type="Rhea" id="RHEA:47252"/>
        <dbReference type="Rhea" id="RHEA-COMP:11964"/>
        <dbReference type="Rhea" id="RHEA-COMP:11965"/>
        <dbReference type="ChEBI" id="CHEBI:15377"/>
        <dbReference type="ChEBI" id="CHEBI:15378"/>
        <dbReference type="ChEBI" id="CHEBI:15379"/>
        <dbReference type="ChEBI" id="CHEBI:17026"/>
        <dbReference type="ChEBI" id="CHEBI:57618"/>
        <dbReference type="ChEBI" id="CHEBI:58210"/>
        <dbReference type="ChEBI" id="CHEBI:62117"/>
    </reaction>
    <physiologicalReaction direction="left-to-right" evidence="45">
        <dbReference type="Rhea" id="RHEA:47253"/>
    </physiologicalReaction>
</comment>
<comment type="catalytic activity">
    <reaction evidence="3">
        <text>progesterone + reduced [NADPH--hemoprotein reductase] + O2 = 16alpha-hydroxyprogesterone + oxidized [NADPH--hemoprotein reductase] + H2O + H(+)</text>
        <dbReference type="Rhea" id="RHEA:47260"/>
        <dbReference type="Rhea" id="RHEA-COMP:11964"/>
        <dbReference type="Rhea" id="RHEA-COMP:11965"/>
        <dbReference type="ChEBI" id="CHEBI:15377"/>
        <dbReference type="ChEBI" id="CHEBI:15378"/>
        <dbReference type="ChEBI" id="CHEBI:15379"/>
        <dbReference type="ChEBI" id="CHEBI:15826"/>
        <dbReference type="ChEBI" id="CHEBI:17026"/>
        <dbReference type="ChEBI" id="CHEBI:57618"/>
        <dbReference type="ChEBI" id="CHEBI:58210"/>
    </reaction>
    <physiologicalReaction direction="left-to-right" evidence="45">
        <dbReference type="Rhea" id="RHEA:47261"/>
    </physiologicalReaction>
</comment>
<comment type="catalytic activity">
    <reaction evidence="5">
        <text>all-trans-retinol + reduced [NADPH--hemoprotein reductase] + O2 = all-trans-retinal + oxidized [NADPH--hemoprotein reductase] + 2 H2O + H(+)</text>
        <dbReference type="Rhea" id="RHEA:42092"/>
        <dbReference type="Rhea" id="RHEA-COMP:11964"/>
        <dbReference type="Rhea" id="RHEA-COMP:11965"/>
        <dbReference type="ChEBI" id="CHEBI:15377"/>
        <dbReference type="ChEBI" id="CHEBI:15378"/>
        <dbReference type="ChEBI" id="CHEBI:15379"/>
        <dbReference type="ChEBI" id="CHEBI:17336"/>
        <dbReference type="ChEBI" id="CHEBI:17898"/>
        <dbReference type="ChEBI" id="CHEBI:57618"/>
        <dbReference type="ChEBI" id="CHEBI:58210"/>
    </reaction>
    <physiologicalReaction direction="left-to-right" evidence="46">
        <dbReference type="Rhea" id="RHEA:42093"/>
    </physiologicalReaction>
</comment>
<comment type="catalytic activity">
    <reaction evidence="5">
        <text>all-trans-retinal + reduced [NADPH--hemoprotein reductase] + O2 = all-trans-retinoate + oxidized [NADPH--hemoprotein reductase] + H2O + 2 H(+)</text>
        <dbReference type="Rhea" id="RHEA:42088"/>
        <dbReference type="Rhea" id="RHEA-COMP:11964"/>
        <dbReference type="Rhea" id="RHEA-COMP:11965"/>
        <dbReference type="ChEBI" id="CHEBI:15377"/>
        <dbReference type="ChEBI" id="CHEBI:15378"/>
        <dbReference type="ChEBI" id="CHEBI:15379"/>
        <dbReference type="ChEBI" id="CHEBI:17898"/>
        <dbReference type="ChEBI" id="CHEBI:35291"/>
        <dbReference type="ChEBI" id="CHEBI:57618"/>
        <dbReference type="ChEBI" id="CHEBI:58210"/>
    </reaction>
    <physiologicalReaction direction="left-to-right" evidence="46">
        <dbReference type="Rhea" id="RHEA:42089"/>
    </physiologicalReaction>
</comment>
<comment type="catalytic activity">
    <reaction evidence="29">
        <text>(5Z,8Z,11Z,14Z)-eicosatetraenoate + reduced [NADPH--hemoprotein reductase] + O2 = (8R,9S)-epoxy-(5Z,11Z,14Z)-eicosatrienoate + oxidized [NADPH--hemoprotein reductase] + H2O + H(+)</text>
        <dbReference type="Rhea" id="RHEA:49884"/>
        <dbReference type="Rhea" id="RHEA-COMP:11964"/>
        <dbReference type="Rhea" id="RHEA-COMP:11965"/>
        <dbReference type="ChEBI" id="CHEBI:15377"/>
        <dbReference type="ChEBI" id="CHEBI:15378"/>
        <dbReference type="ChEBI" id="CHEBI:15379"/>
        <dbReference type="ChEBI" id="CHEBI:32395"/>
        <dbReference type="ChEBI" id="CHEBI:57618"/>
        <dbReference type="ChEBI" id="CHEBI:58210"/>
        <dbReference type="ChEBI" id="CHEBI:131975"/>
    </reaction>
    <physiologicalReaction direction="left-to-right" evidence="49">
        <dbReference type="Rhea" id="RHEA:49885"/>
    </physiologicalReaction>
</comment>
<comment type="catalytic activity">
    <reaction evidence="29">
        <text>(5Z,8Z,11Z,14Z)-eicosatetraenoate + reduced [NADPH--hemoprotein reductase] + O2 = (11R,12S)-epoxy-(5Z,8Z,14Z)-eicosatrienoate + oxidized [NADPH--hemoprotein reductase] + H2O + H(+)</text>
        <dbReference type="Rhea" id="RHEA:49880"/>
        <dbReference type="Rhea" id="RHEA-COMP:11964"/>
        <dbReference type="Rhea" id="RHEA-COMP:11965"/>
        <dbReference type="ChEBI" id="CHEBI:15377"/>
        <dbReference type="ChEBI" id="CHEBI:15378"/>
        <dbReference type="ChEBI" id="CHEBI:15379"/>
        <dbReference type="ChEBI" id="CHEBI:32395"/>
        <dbReference type="ChEBI" id="CHEBI:57618"/>
        <dbReference type="ChEBI" id="CHEBI:58210"/>
        <dbReference type="ChEBI" id="CHEBI:131970"/>
    </reaction>
    <physiologicalReaction direction="left-to-right" evidence="49">
        <dbReference type="Rhea" id="RHEA:49881"/>
    </physiologicalReaction>
</comment>
<comment type="catalytic activity">
    <reaction evidence="29">
        <text>(5Z,8Z,11Z,14Z)-eicosatetraenoate + reduced [NADPH--hemoprotein reductase] + O2 = (11S,12R)-epoxy-(5Z,8Z,14Z)-eicosatrienoate + oxidized [NADPH--hemoprotein reductase] + H2O + H(+)</text>
        <dbReference type="Rhea" id="RHEA:49876"/>
        <dbReference type="Rhea" id="RHEA-COMP:11964"/>
        <dbReference type="Rhea" id="RHEA-COMP:11965"/>
        <dbReference type="ChEBI" id="CHEBI:15377"/>
        <dbReference type="ChEBI" id="CHEBI:15378"/>
        <dbReference type="ChEBI" id="CHEBI:15379"/>
        <dbReference type="ChEBI" id="CHEBI:32395"/>
        <dbReference type="ChEBI" id="CHEBI:57618"/>
        <dbReference type="ChEBI" id="CHEBI:58210"/>
        <dbReference type="ChEBI" id="CHEBI:131969"/>
    </reaction>
    <physiologicalReaction direction="left-to-right" evidence="49">
        <dbReference type="Rhea" id="RHEA:49877"/>
    </physiologicalReaction>
</comment>
<comment type="catalytic activity">
    <reaction evidence="29">
        <text>(5Z,8Z,11Z,14Z)-eicosatetraenoate + reduced [NADPH--hemoprotein reductase] + O2 = (14R,15S)-epoxy-(5Z,8Z,11Z)-eicosatrienoate + oxidized [NADPH--hemoprotein reductase] + H2O + H(+)</text>
        <dbReference type="Rhea" id="RHEA:49860"/>
        <dbReference type="Rhea" id="RHEA-COMP:11964"/>
        <dbReference type="Rhea" id="RHEA-COMP:11965"/>
        <dbReference type="ChEBI" id="CHEBI:15377"/>
        <dbReference type="ChEBI" id="CHEBI:15378"/>
        <dbReference type="ChEBI" id="CHEBI:15379"/>
        <dbReference type="ChEBI" id="CHEBI:32395"/>
        <dbReference type="ChEBI" id="CHEBI:57618"/>
        <dbReference type="ChEBI" id="CHEBI:58210"/>
        <dbReference type="ChEBI" id="CHEBI:131965"/>
    </reaction>
    <physiologicalReaction direction="left-to-right" evidence="49">
        <dbReference type="Rhea" id="RHEA:49861"/>
    </physiologicalReaction>
</comment>
<comment type="catalytic activity">
    <reaction evidence="30">
        <text>(5S)-hydroperoxy-(6E,8Z,11Z,14Z)-eicosatetraenoate = 5-oxo-(6E,8Z,11Z,14Z)-eicosatetraenoate + H2O</text>
        <dbReference type="Rhea" id="RHEA:48632"/>
        <dbReference type="ChEBI" id="CHEBI:15377"/>
        <dbReference type="ChEBI" id="CHEBI:57450"/>
        <dbReference type="ChEBI" id="CHEBI:65342"/>
    </reaction>
    <physiologicalReaction direction="left-to-right" evidence="50">
        <dbReference type="Rhea" id="RHEA:48633"/>
    </physiologicalReaction>
</comment>
<comment type="catalytic activity">
    <reaction evidence="30">
        <text>(12S)-hydroperoxy-(5Z,8Z,10E,14Z)-eicosatetraenoate = 12-oxo-(5Z,8Z,10E,14Z)-eicosatetraenoate + H2O</text>
        <dbReference type="Rhea" id="RHEA:37947"/>
        <dbReference type="ChEBI" id="CHEBI:15377"/>
        <dbReference type="ChEBI" id="CHEBI:57444"/>
        <dbReference type="ChEBI" id="CHEBI:75231"/>
        <dbReference type="EC" id="4.2.1.152"/>
    </reaction>
    <physiologicalReaction direction="left-to-right" evidence="50">
        <dbReference type="Rhea" id="RHEA:37948"/>
    </physiologicalReaction>
</comment>
<comment type="catalytic activity">
    <reaction evidence="30">
        <text>(13S)-hydroperoxy-(9Z,11E)-octadecadienoate = 13-oxo-(9Z,11E)-octadecadienoate + H2O</text>
        <dbReference type="Rhea" id="RHEA:48716"/>
        <dbReference type="ChEBI" id="CHEBI:15377"/>
        <dbReference type="ChEBI" id="CHEBI:57466"/>
        <dbReference type="ChEBI" id="CHEBI:90781"/>
    </reaction>
    <physiologicalReaction direction="left-to-right" evidence="50">
        <dbReference type="Rhea" id="RHEA:48717"/>
    </physiologicalReaction>
</comment>
<comment type="catalytic activity">
    <reaction evidence="30">
        <text>(15S)-hydroperoxy-(5Z,8Z,11Z,13E)-eicosatetraenoate = 15-oxo-(5Z,8Z,11Z,13E)-eicosatetraenoate + H2O</text>
        <dbReference type="Rhea" id="RHEA:48636"/>
        <dbReference type="ChEBI" id="CHEBI:15377"/>
        <dbReference type="ChEBI" id="CHEBI:57410"/>
        <dbReference type="ChEBI" id="CHEBI:57446"/>
    </reaction>
    <physiologicalReaction direction="left-to-right" evidence="50">
        <dbReference type="Rhea" id="RHEA:48637"/>
    </physiologicalReaction>
</comment>
<comment type="cofactor">
    <cofactor evidence="31">
        <name>heme</name>
        <dbReference type="ChEBI" id="CHEBI:30413"/>
    </cofactor>
</comment>
<comment type="activity regulation">
    <text evidence="32 33">Enzyme activity is increased by liposomes containing anionic phospholipids, phosphatidic acid and cardiolipin. Inhibited by naringenin with an IC(50) of 5 uM (PubMed:22888116, PubMed:22935222). Enzyme activity is increased by cytochrome b5.</text>
</comment>
<comment type="biophysicochemical properties">
    <kinetics>
        <KM evidence="3">6.9 uM for 17-beta-estradiol (2-hydroxylation)</KM>
        <KM evidence="3">5.1 uM for 17-beta-estradiol (4-hydroxylation)</KM>
        <KM evidence="3">17 uM for testosterone(6-beta-hydroxylation)</KM>
        <KM evidence="3">25 uM for progesterone (6-beta-hydroxylation)</KM>
        <KM evidence="3">23 uM for progesterone (16-alpha-hydroxylation)</KM>
        <KM evidence="20">18.5 uM for all-trans-retinol</KM>
        <KM evidence="5">11 uM for all-trans retinol</KM>
        <KM evidence="20">8.5 uM for all-trans-retinal</KM>
        <KM evidence="20">29.8 uM for arachidonic acid</KM>
        <KM evidence="20">212.8 uM for 7,12-dimethyltetraphene</KM>
        <Vmax evidence="3">0.42 nmol/min/nmol enzyme for 17-beta-estradiol (2-hydroxylation)</Vmax>
        <Vmax evidence="3">0.91 nmol/min/nmol enzyme for 17-beta-estradiol (4-hydroxylation)</Vmax>
        <Vmax evidence="3">2.2 nmol/min/nmol enzyme for testosterone (6-beta-hydroxylation)</Vmax>
        <Vmax evidence="3">0.6 nmol/min/nmol enzyme for progesterone (6-beta-hydroxylation)</Vmax>
        <Vmax evidence="3">2.3 nmol/min/nmol enzyme for progesterone (16-alpha-hydroxylation)</Vmax>
        <Vmax evidence="5">493.0 pmol/min/nmol enzyme toward all-trans retinol</Vmax>
        <text evidence="20">kcat is 0.15 min(-1) for retinol, 0.77 min(-1) for retinal, 2.86 min(-1) for 7,12-dimethyltetraphene, 0.48 min(-1) for arachidonic acid.</text>
    </kinetics>
</comment>
<comment type="pathway">
    <text evidence="10 16">Steroid hormone biosynthesis.</text>
</comment>
<comment type="pathway">
    <text evidence="5 20">Cofactor metabolism; retinol metabolism.</text>
</comment>
<comment type="pathway">
    <text evidence="29">Lipid metabolism; arachidonate metabolism.</text>
</comment>
<comment type="interaction">
    <interactant intactId="EBI-1055133">
        <id>Q16678</id>
    </interactant>
    <interactant intactId="EBI-2257090">
        <id>Q02763</id>
        <label>TEK</label>
    </interactant>
    <organismsDiffer>false</organismsDiffer>
    <experiments>6</experiments>
</comment>
<comment type="subcellular location">
    <subcellularLocation>
        <location evidence="1">Endoplasmic reticulum membrane</location>
        <topology evidence="1">Peripheral membrane protein</topology>
    </subcellularLocation>
    <subcellularLocation>
        <location evidence="1">Microsome membrane</location>
        <topology evidence="1">Peripheral membrane protein</topology>
    </subcellularLocation>
    <subcellularLocation>
        <location evidence="1">Mitochondrion</location>
    </subcellularLocation>
    <text evidence="1">Located primarily in endoplasmic reticulum. Upon treatment with 2,3,7,8-tetrachlorodibenzo-p-dioxin (TCDD), CYP1B1 is also targeted to mitochondria.</text>
</comment>
<comment type="tissue specificity">
    <text evidence="28 35">Expressed in heart, brain, lung, skeletal muscle, kidney, spleen, thymus, prostate, testis, ovary, small intestine, colon, and peripheral blood leukocytes (PubMed:8175734). Expressed in retinal endothelial cells and umbilical vein endothelial cells (at protein level) (PubMed:19005183).</text>
</comment>
<comment type="induction">
    <text evidence="35">By polycyclic aromatic hydrocarbons (PAH) and 2,3,7,8-tetrachlorodibenzo-p-dioxin (TCDD).</text>
</comment>
<comment type="polymorphism">
    <text>Various CYP1B1 alleles are known. The sequence shown is that of allele CYP1B1*1.</text>
</comment>
<comment type="disease" evidence="8">
    <disease id="DI-04923">
        <name>Anterior segment dysgenesis 6</name>
        <acronym>ASGD6</acronym>
        <description>A form of anterior segment dysgenesis, a group of defects affecting anterior structures of the eye including cornea, iris, lens, trabecular meshwork, and Schlemm canal. Anterior segment dysgeneses result from abnormal migration or differentiation of the neural crest derived mesenchymal cells that give rise to components of the anterior chamber during eye development. Different anterior segment anomalies may exist alone or in combination, including iris hypoplasia, enlarged or reduced corneal diameter, corneal vascularization and opacity, posterior embryotoxon, corectopia, polycoria, abnormal iridocorneal angle, ectopia lentis, and anterior synechiae between the iris and posterior corneal surface. Clinical conditions falling within the phenotypic spectrum of anterior segment dysgeneses include aniridia, Axenfeld anomaly, Reiger anomaly/syndrome, Peters anomaly, and iridogoniodysgenesis. ASGD6 patients predominantly manifest Peters anomaly. Peters anomaly consists of corneal leukoma, defects in the posterior structures of the cornea such as absence of the posterior corneal stroma and Descemet membrane, and a variable degree of iridocorneal and/or keratolenticular adhesions. Over 50% of patients develop glaucoma in childhood.</description>
        <dbReference type="MIM" id="617315"/>
    </disease>
    <text>The disease is caused by variants affecting the gene represented in this entry.</text>
</comment>
<comment type="disease" evidence="2 4 7 9 11 13 14 15 17 18 19 21 22 23 24 25 26 27 36 37">
    <disease id="DI-00935">
        <name>Glaucoma 3, primary congenital, A</name>
        <acronym>GLC3A</acronym>
        <description>An autosomal recessive form of primary congenital glaucoma (PCG). PCG is characterized by marked increase of intraocular pressure at birth or early childhood, large ocular globes (buphthalmos) and corneal edema. It results from developmental defects of the trabecular meshwork and anterior chamber angle of the eye that prevent adequate drainage of aqueous humor.</description>
        <dbReference type="MIM" id="231300"/>
    </disease>
    <text>The disease is caused by variants affecting distinct genetic loci, including the gene represented in this entry.</text>
</comment>
<comment type="disease" evidence="11">
    <disease id="DI-00937">
        <name>Glaucoma 1, open angle, A</name>
        <acronym>GLC1A</acronym>
        <description>A form of primary open angle glaucoma (POAG). POAG is characterized by a specific pattern of optic nerve and visual field defects. The angle of the anterior chamber of the eye is open, and usually the intraocular pressure is increased. However, glaucoma can occur at any intraocular pressure. The disease is generally asymptomatic until the late stages, by which time significant and irreversible optic nerve damage has already taken place.</description>
        <dbReference type="MIM" id="137750"/>
    </disease>
    <text evidence="11">The gene represented in this entry acts as a disease modifier. Digenic mutations in CYP1B1 and MYOC have been found in a family segregating both primary adult-onset and juvenile forms of open angle glaucoma (PubMed:11774072). All affected family members with mutations in both MYOC and CYP1B1 had juvenile glaucoma, whereas those with only the MYOC mutation had the adult-onset form (PubMed:11774072).</text>
</comment>
<comment type="similarity">
    <text evidence="44">Belongs to the cytochrome P450 family.</text>
</comment>
<comment type="online information" name="PharmVar Pharmacogen Variation Consortium">
    <link uri="https://www.pharmvar.org/gene/CYP1B1"/>
    <text>CYP1B1 alleles</text>
</comment>
<reference key="1">
    <citation type="journal article" date="1994" name="J. Biol. Chem.">
        <title>Complete cDNA sequence of a human dioxin-inducible mRNA identifies a new gene subfamily of cytochrome P450 that maps to chromosome 2.</title>
        <authorList>
            <person name="Sutter T.R."/>
            <person name="Tang Y.M."/>
            <person name="Hayes C.L."/>
            <person name="Wo Y.-Y.P."/>
            <person name="Jabs E.W."/>
            <person name="Li X."/>
            <person name="Yin H."/>
            <person name="Cody C.W."/>
            <person name="Greenlee W.F."/>
        </authorList>
    </citation>
    <scope>NUCLEOTIDE SEQUENCE [MRNA]</scope>
    <scope>TISSUE SPECIFICITY</scope>
    <scope>INDUCTION</scope>
</reference>
<reference key="2">
    <citation type="journal article" date="1996" name="J. Biol. Chem.">
        <title>Isolation and characterization of the human cytochrome P450 CYP1B1 gene.</title>
        <authorList>
            <person name="Tang Y.M."/>
            <person name="Wo Y.-Y.P."/>
            <person name="Stewart J."/>
            <person name="Hawkins A.L."/>
            <person name="Griffin C.A."/>
            <person name="Sutter T.R."/>
            <person name="Greenlee W.F."/>
        </authorList>
    </citation>
    <scope>NUCLEOTIDE SEQUENCE [GENOMIC DNA]</scope>
</reference>
<reference key="3">
    <citation type="submission" date="2001-11" db="EMBL/GenBank/DDBJ databases">
        <title>Physical/genetic map of the 2p22-2p21 region on chromosome 2.</title>
        <authorList>
            <person name="Gorry M.C."/>
            <person name="Zhang Y."/>
            <person name="Marks J.J."/>
            <person name="Suppe B."/>
            <person name="Hart P.S."/>
            <person name="Cortelli J.R."/>
            <person name="Pallos D."/>
            <person name="Hart T.C."/>
        </authorList>
    </citation>
    <scope>NUCLEOTIDE SEQUENCE [GENOMIC DNA]</scope>
</reference>
<reference key="4">
    <citation type="submission" date="2004-10" db="EMBL/GenBank/DDBJ databases">
        <title>Cloning of human full-length CDSs in BD Creator(TM) system donor vector.</title>
        <authorList>
            <person name="Kalnine N."/>
            <person name="Chen X."/>
            <person name="Rolfs A."/>
            <person name="Halleck A."/>
            <person name="Hines L."/>
            <person name="Eisenstein S."/>
            <person name="Koundinya M."/>
            <person name="Raphael J."/>
            <person name="Moreira D."/>
            <person name="Kelley T."/>
            <person name="LaBaer J."/>
            <person name="Lin Y."/>
            <person name="Phelan M."/>
            <person name="Farmer A."/>
        </authorList>
    </citation>
    <scope>NUCLEOTIDE SEQUENCE [LARGE SCALE MRNA]</scope>
    <scope>VARIANT SER-453</scope>
</reference>
<reference key="5">
    <citation type="submission" date="2003-09" db="EMBL/GenBank/DDBJ databases">
        <authorList>
            <consortium name="NIEHS SNPs program"/>
        </authorList>
    </citation>
    <scope>NUCLEOTIDE SEQUENCE [GENOMIC DNA]</scope>
    <scope>VARIANTS GLY-48; SER-119; ASN-206; LEU-266; VAL-432 AND SER-453</scope>
</reference>
<reference key="6">
    <citation type="journal article" date="2004" name="Genome Res.">
        <title>The status, quality, and expansion of the NIH full-length cDNA project: the Mammalian Gene Collection (MGC).</title>
        <authorList>
            <consortium name="The MGC Project Team"/>
        </authorList>
    </citation>
    <scope>NUCLEOTIDE SEQUENCE [LARGE SCALE MRNA]</scope>
    <source>
        <tissue>Lung</tissue>
    </source>
</reference>
<reference key="7">
    <citation type="submission" date="1999-07" db="EMBL/GenBank/DDBJ databases">
        <authorList>
            <person name="Guillemette C."/>
        </authorList>
    </citation>
    <scope>NUCLEOTIDE SEQUENCE [GENOMIC DNA] OF 1-112</scope>
    <scope>VARIANT GLY-48</scope>
</reference>
<reference key="8">
    <citation type="journal article" date="1999" name="Carcinogenesis">
        <title>Catalytic properties of polymorphic human cytochrome P450 1B1 variants.</title>
        <authorList>
            <person name="Shimada T."/>
            <person name="Watanabe J."/>
            <person name="Kawajiri K."/>
            <person name="Sutter T.R."/>
            <person name="Guengerich F.P."/>
            <person name="Gillam E.M.J."/>
            <person name="Inoue K."/>
        </authorList>
    </citation>
    <scope>FUNCTION</scope>
    <scope>CATALYTIC ACTIVITY</scope>
    <scope>BIOPHYSICOCHEMICAL PROPERTIES</scope>
    <scope>CHARACTERIZATION OF VARIANTS SER-119 AND VAL-432</scope>
</reference>
<reference key="9">
    <citation type="journal article" date="2000" name="Drug Metab. Dispos.">
        <title>Biosynthesis of all-trans-retinoic acid from all-trans-retinol: catalysis of all-trans-retinol oxidation by human P-450 cytochromes.</title>
        <authorList>
            <person name="Chen H."/>
            <person name="Howald W.N."/>
            <person name="Juchau M.R."/>
        </authorList>
    </citation>
    <scope>FUNCTION</scope>
    <scope>CATALYTIC ACTIVITY</scope>
    <scope>PATHWAY</scope>
    <scope>BIOPHYSICOCHEMICAL PROPERTIES</scope>
</reference>
<reference key="10">
    <citation type="journal article" date="2001" name="Metabolism">
        <title>Role of human cytochrome P450 1A1, 1A2, 1B1, and 3A4 in the 2-, 4-, and 16alpha-hydroxylation of 17beta-estradiol.</title>
        <authorList>
            <person name="Badawi A.F."/>
            <person name="Cavalieri E.L."/>
            <person name="Rogan E.G."/>
        </authorList>
    </citation>
    <scope>FUNCTION</scope>
    <scope>CATALYTIC ACTIVITY</scope>
    <scope>PATHWAY</scope>
</reference>
<reference key="11">
    <citation type="journal article" date="2003" name="Endocrinology">
        <title>Characterization of the oxidative metabolites of 17beta-estradiol and estrone formed by 15 selectively expressed human cytochrome p450 isoforms.</title>
        <authorList>
            <person name="Lee A.J."/>
            <person name="Cai M.X."/>
            <person name="Thomas P.E."/>
            <person name="Conney A.H."/>
            <person name="Zhu B.T."/>
        </authorList>
    </citation>
    <scope>FUNCTION</scope>
    <scope>CATALYTIC ACTIVITY</scope>
    <scope>PATHWAY</scope>
</reference>
<reference key="12">
    <citation type="journal article" date="2004" name="Drug Metab. Dispos.">
        <title>Metabolism of retinoids and arachidonic acid by human and mouse cytochrome P450 1b1.</title>
        <authorList>
            <person name="Choudhary D."/>
            <person name="Jansson I."/>
            <person name="Stoilov I."/>
            <person name="Sarfarazi M."/>
            <person name="Schenkman J.B."/>
        </authorList>
    </citation>
    <scope>FUNCTION</scope>
    <scope>CATALYTIC ACTIVITY</scope>
    <scope>BIOPHYSICOCHEMICAL PROPERTIES</scope>
    <scope>PATHWAY</scope>
</reference>
<reference key="13">
    <citation type="journal article" date="2009" name="Blood">
        <title>CYP1B1 expression promotes the proangiogenic phenotype of endothelium through decreased intracellular oxidative stress and thrombospondin-2 expression.</title>
        <authorList>
            <person name="Tang Y."/>
            <person name="Scheef E.A."/>
            <person name="Wang S."/>
            <person name="Sorenson C.M."/>
            <person name="Marcus C.B."/>
            <person name="Jefcoate C.R."/>
            <person name="Sheibani N."/>
        </authorList>
    </citation>
    <scope>FUNCTION IN VASCULAR DEVELOPMENT AND ANGIOGENESIS</scope>
    <scope>TISSUE SPECIFICITY</scope>
</reference>
<reference key="14">
    <citation type="journal article" date="2010" name="Rapid Commun. Mass Spectrom.">
        <title>Analysis of epoxyeicosatrienoic acids by chiral liquid chromatography/electron capture atmospheric pressure chemical ionization mass spectrometry using [13C]-analog internal standards.</title>
        <authorList>
            <person name="Mesaros C."/>
            <person name="Lee S.H."/>
            <person name="Blair I.A."/>
        </authorList>
    </citation>
    <scope>FUNCTION</scope>
    <scope>CATALYTIC ACTIVITY</scope>
    <scope>PATHWAY</scope>
</reference>
<reference key="15">
    <citation type="journal article" date="2011" name="Drug Metab. Dispos.">
        <title>Human CYP2S1 metabolizes cyclooxygenase- and lipoxygenase-derived eicosanoids.</title>
        <authorList>
            <person name="Bui P."/>
            <person name="Imaizumi S."/>
            <person name="Beedanagari S.R."/>
            <person name="Reddy S.T."/>
            <person name="Hankinson O."/>
        </authorList>
    </citation>
    <scope>FUNCTION</scope>
    <scope>CATALYTIC ACTIVITY</scope>
</reference>
<reference key="16">
    <citation type="journal article" date="2012" name="J. Biochem.">
        <title>Increase of human CYP1B1 activities by acidic phospholipids and kinetic deuterium isotope effects on CYP1B1 substrate oxidation.</title>
        <authorList>
            <person name="Jang H.H."/>
            <person name="Kim S.Y."/>
            <person name="Kang J.Y."/>
            <person name="Park S.H."/>
            <person name="Ryu S.H."/>
            <person name="Ahn T."/>
            <person name="Yun C.H."/>
        </authorList>
    </citation>
    <scope>CATALYTIC ACTIVITY</scope>
    <scope>ACTIVITY REGULATION</scope>
    <scope>FUNCTION</scope>
</reference>
<reference key="17">
    <citation type="journal article" date="2013" name="Br. J. Nutr.">
        <title>The citrus flavanone naringenin suppresses CYP1B1 transactivation through antagonising xenobiotic-responsive element binding.</title>
        <authorList>
            <person name="Poon C.H."/>
            <person name="Wong T.Y."/>
            <person name="Wang Y."/>
            <person name="Tsuchiya Y."/>
            <person name="Nakajima M."/>
            <person name="Yokoi T."/>
            <person name="Leung L.K."/>
        </authorList>
    </citation>
    <scope>ACTIVITY REGULATION</scope>
</reference>
<reference key="18">
    <citation type="journal article" date="2013" name="Mol. Pharmacol.">
        <title>Specificity determinants of CYP1B1 estradiol hydroxylation.</title>
        <authorList>
            <person name="Nishida C.R."/>
            <person name="Everett S."/>
            <person name="Ortiz de Montellano P.R."/>
        </authorList>
    </citation>
    <scope>FUNCTION</scope>
    <scope>CATALYTIC ACTIVITY</scope>
    <scope>ACTIVITY REGULATION</scope>
    <scope>MUTAGENESIS OF VAL-395</scope>
</reference>
<reference key="19">
    <citation type="journal article" date="2011" name="J. Biol. Chem.">
        <title>Structural characterization of the complex between alpha-naphthoflavone and human cytochrome P450 1B1.</title>
        <authorList>
            <person name="Wang A."/>
            <person name="Savas U."/>
            <person name="Stout C.D."/>
            <person name="Johnson E.F."/>
        </authorList>
    </citation>
    <scope>X-RAY CRYSTALLOGRAPHY (2.7 ANGSTROMS) OF 51-543 IN COMPLEX WITH HEME AND THE INHIBITOR ALPHA-NAPHTOFLAVONE</scope>
    <scope>COFACTOR</scope>
</reference>
<reference key="20">
    <citation type="journal article" date="1998" name="Am. J. Hum. Genet.">
        <title>Mutations in CYP1B1, the gene for cytochrome P4501B1, are the predominant cause of primary congenital glaucoma in Saudi Arabia.</title>
        <authorList>
            <person name="Bejjani B.A."/>
            <person name="Lewis R.A."/>
            <person name="Tomey K.F."/>
            <person name="Anderson K.L."/>
            <person name="Dueker D.K."/>
            <person name="Jabak M."/>
            <person name="Astle W.F."/>
            <person name="Otterud B."/>
            <person name="Leppert M."/>
            <person name="Lupski J.R."/>
        </authorList>
    </citation>
    <scope>VARIANTS GLC3A GLU-61; ASN-374 AND TRP-469</scope>
</reference>
<reference key="21">
    <citation type="journal article" date="1998" name="Am. J. Hum. Genet.">
        <title>Sequence analysis and homology modeling suggest that primary congenital glaucoma on 2p21 results from mutations disrupting either the hinge region or the conserved core structures of cytochrome P4501B1.</title>
        <authorList>
            <person name="Stoilov I."/>
            <person name="Akarsu A.N."/>
            <person name="Alozie I."/>
            <person name="Child A."/>
            <person name="Barsoum-Homsy M."/>
            <person name="Turacli M.E."/>
            <person name="Or M."/>
            <person name="Lewis R.A."/>
            <person name="Ozdemir N."/>
            <person name="Brice G."/>
            <person name="Aktan S.G."/>
            <person name="Chevrette L."/>
            <person name="Coca-Prados M."/>
            <person name="Sarfarazi M."/>
        </authorList>
    </citation>
    <scope>VARIANT GLC3A TRP-365</scope>
    <scope>VARIANTS CYS-57; GLU-61; TRP-365; LEU-379; LYS-387; HIS-390; VAL-432; LEU-437 AND TRP-469</scope>
</reference>
<reference key="22">
    <citation type="journal article" date="1998" name="Cancer Res.">
        <title>Association of cytochrome P450 1B1 (CYP1B1) polymorphism with steroid receptor status in breast cancer.</title>
        <authorList>
            <person name="Bailey L.R."/>
            <person name="Roodi N."/>
            <person name="Dupont W.D."/>
            <person name="Parl F.F."/>
        </authorList>
    </citation>
    <scope>VARIANTS VAL-432 AND SER-453</scope>
</reference>
<reference key="23">
    <citation type="journal article" date="1999" name="Cancer Res.">
        <authorList>
            <person name="Bailey L.R."/>
            <person name="Roodi N."/>
            <person name="Dupont W.D."/>
            <person name="Parl F.F."/>
        </authorList>
    </citation>
    <scope>ERRATUM OF PUBMED:9823305</scope>
</reference>
<reference key="24">
    <citation type="journal article" date="1999" name="J. Med. Genet.">
        <title>Identification of a single ancestral CYP1B1 mutation in Slovak Gypsies (Roms) affected with primary congenital glaucoma.</title>
        <authorList>
            <person name="Plasilova M."/>
            <person name="Stoilov I."/>
            <person name="Sarfarazi M."/>
            <person name="Kadasi L."/>
            <person name="Ferakova E."/>
            <person name="Ferak V."/>
        </authorList>
    </citation>
    <scope>VARIANT GLC3A LYS-387</scope>
</reference>
<reference key="25">
    <citation type="journal article" date="2000" name="Hum. Mol. Genet.">
        <title>Multiple CYP1B1 mutations and incomplete penetrance in an inbred population segregating primary congenital glaucoma suggest frequent de novo events and a dominant modifier locus.</title>
        <authorList>
            <person name="Bejjani B.A."/>
            <person name="Stockton D.W."/>
            <person name="Lewis R.A."/>
            <person name="Tomey K.F."/>
            <person name="Dueker D.K."/>
            <person name="Jabak M."/>
            <person name="Astle W.F."/>
            <person name="Lupski J.R."/>
        </authorList>
    </citation>
    <scope>VARIANTS GLC3A GLU-61; PRO-77; 269-SER--PHE-271 DEL; HIS-368; ASN-374; SER-390 AND TRP-469</scope>
    <scope>VARIANTS GLY-48; SER-119; VAL-432 AND SER-453</scope>
</reference>
<reference key="26">
    <citation type="journal article" date="2000" name="Hum. Mol. Genet.">
        <authorList>
            <person name="Bejjani B.A."/>
            <person name="Stockton D.W."/>
            <person name="Lewis R.A."/>
            <person name="Tomey K.F."/>
            <person name="Dueker D.K."/>
            <person name="Jabak M."/>
            <person name="Astle W.F."/>
            <person name="Lupski J.R."/>
        </authorList>
    </citation>
    <scope>ERRATUM OF PUBMED:10655546</scope>
</reference>
<reference key="27">
    <citation type="journal article" date="2000" name="Ophthalmic Genet.">
        <title>Novel compound heterozygous mutations in the cytochrome P4501B1 gene (CYP1B1) in a Japanese patient with primary congenital glaucoma.</title>
        <authorList>
            <person name="Ohtake Y."/>
            <person name="Kubota R."/>
            <person name="Tanino T."/>
            <person name="Miyata H."/>
            <person name="Mashima Y."/>
        </authorList>
    </citation>
    <scope>VARIANT GLC3A MET-364</scope>
</reference>
<reference key="28">
    <citation type="journal article" date="2000" name="Pharmacogenetics">
        <title>Association of CYP1B1 genetic polymorphism with incidence to breast and lung cancer.</title>
        <authorList>
            <person name="Watanabe J."/>
            <person name="Shimada T."/>
            <person name="Gillam E.M."/>
            <person name="Ikuta T."/>
            <person name="Suemasu K."/>
            <person name="Higashi Y."/>
            <person name="Gotoh O."/>
            <person name="Kawajiri K."/>
        </authorList>
    </citation>
    <scope>VARIANTS SER-119 AND VAL-432</scope>
    <scope>ASSOCIATION WITH BREAST OR LUNG CANCER</scope>
</reference>
<reference key="29">
    <citation type="journal article" date="2001" name="Invest. Ophthalmol. Vis. Sci.">
        <title>Novel cytochrome P4501B1 (CYP1B1) gene mutations in Japanese patients with primary congenital glaucoma.</title>
        <authorList>
            <person name="Mashima Y."/>
            <person name="Suzuki Y."/>
            <person name="Sergeev Y."/>
            <person name="Ohtake Y."/>
            <person name="Tanino T."/>
            <person name="Kimura I."/>
            <person name="Miyata H."/>
            <person name="Aihara M."/>
            <person name="Tanihara H."/>
            <person name="Inatani M."/>
            <person name="Azuma N."/>
            <person name="Iwata T."/>
            <person name="Araie M."/>
        </authorList>
    </citation>
    <scope>VARIANTS GLC3A VAL-192; ILE-198; LEU-320; PHE-330; MET-364; GLN-444 AND GLY-499</scope>
    <scope>VARIANTS GLY-48; SER-119 AND VAL-432</scope>
</reference>
<reference key="30">
    <citation type="journal article" date="2001" name="Invest. Ophthalmol. Vis. Sci.">
        <authorList>
            <person name="Mashima Y."/>
            <person name="Suzuki Y."/>
            <person name="Sergeev Y."/>
            <person name="Ohtake Y."/>
            <person name="Tanino T."/>
            <person name="Kimura I."/>
            <person name="Miyata H."/>
            <person name="Aihara M."/>
            <person name="Tanihara H."/>
            <person name="Inatani M."/>
            <person name="Azuma N."/>
            <person name="Iwata T."/>
            <person name="Araie M."/>
        </authorList>
    </citation>
    <scope>ERRATUM OF PUBMED:11527932</scope>
</reference>
<reference key="31">
    <citation type="journal article" date="2001" name="J. Med. Genet.">
        <title>Phenotypic heterogeneity of CYP1B1: mutations in a patient with Peters' anomaly.</title>
        <authorList>
            <person name="Vincent A."/>
            <person name="Billingsley G."/>
            <person name="Priston M."/>
            <person name="Williams-Lyn D."/>
            <person name="Sutherland J."/>
            <person name="Glaser T."/>
            <person name="Oliver E."/>
            <person name="Walter M.A."/>
            <person name="Heathcote G."/>
            <person name="Levin A."/>
            <person name="Heon E."/>
        </authorList>
    </citation>
    <scope>INVOLVEMENT IN ASGD6</scope>
</reference>
<reference key="32">
    <citation type="journal article" date="2002" name="Am. J. Hum. Genet.">
        <title>Digenic inheritance of early-onset glaucoma: CYP1B1, a potential modifier gene.</title>
        <authorList>
            <person name="Vincent A.L."/>
            <person name="Billingsley G."/>
            <person name="Buys Y."/>
            <person name="Levin A.V."/>
            <person name="Priston M."/>
            <person name="Trope G."/>
            <person name="Williams-Lyn D."/>
            <person name="Heon E."/>
        </authorList>
    </citation>
    <scope>VARIANT GLC3A PHE-345</scope>
    <scope>VARIANT GLC1A HIS-368</scope>
    <scope>VARIANT VAL-432</scope>
</reference>
<reference key="33">
    <citation type="journal article" date="2002" name="Invest. Ophthalmol. Vis. Sci.">
        <title>Identification of novel mutations causing familial primary congenital glaucoma in Indian pedigrees.</title>
        <authorList>
            <person name="Panicker S.G."/>
            <person name="Reddy A.B.M."/>
            <person name="Mandal A.K."/>
            <person name="Ahmed N."/>
            <person name="Nagarajaram H.A."/>
            <person name="Hasnain S.E."/>
            <person name="Balasubramanian D."/>
        </authorList>
    </citation>
    <scope>VARIANTS GLC3A GLU-61; LEU-193; LYS-229 AND HIS-368</scope>
    <scope>VARIANTS GLY-48; SER-184 AND VAL-432</scope>
</reference>
<reference key="34">
    <citation type="journal article" date="2002" name="Invest. Ophthalmol. Vis. Sci.">
        <title>Molecular genetics of primary congenital glaucoma in Brazil.</title>
        <authorList>
            <person name="Stoilov I.R."/>
            <person name="Costa V.P."/>
            <person name="Vasconcellos J.P.C."/>
            <person name="Melo M.B."/>
            <person name="Betinjane A.J."/>
            <person name="Carani J.C.E."/>
            <person name="Oltrogge E.V."/>
            <person name="Sarfarazi M."/>
        </authorList>
    </citation>
    <scope>VARIANTS GLC3A HIS-368; LYS-387; LEU-437 AND GLY-443</scope>
    <scope>VARIANTS GLY-48; SER-119; VAL-432 AND SER-453</scope>
</reference>
<reference key="35">
    <citation type="journal article" date="2002" name="Mol. Pharmacol.">
        <title>Functional analysis of six different polymorphic CYP1B1 enzyme variants found in an Ethiopian population.</title>
        <authorList>
            <person name="Aklillu E."/>
            <person name="Oscarson M."/>
            <person name="Hidestrand M."/>
            <person name="Leidvik B."/>
            <person name="Otter C."/>
            <person name="Ingelman-Sundberg M."/>
        </authorList>
    </citation>
    <scope>VARIANTS GLY-48; SER-119; VAL-432; GLY-443 AND SER-453</scope>
</reference>
<reference key="36">
    <citation type="journal article" date="2003" name="Hum. Genet.">
        <title>Gene symbol: CYP1B1. Disease: glaucoma, primary congenital.</title>
        <authorList>
            <person name="Chakrabarti S."/>
            <person name="Komatireddy S."/>
            <person name="Mandal A.K."/>
            <person name="Balasubramanian D."/>
        </authorList>
    </citation>
    <scope>VARIANTS GLC3A ARG-144 AND CYS-445</scope>
</reference>
<reference key="37">
    <citation type="journal article" date="2003" name="Hum. Mutat.">
        <title>Novel cytochrome P450 1B1 (CYP1B1) mutations in patients with primary congenital glaucoma in France.</title>
        <authorList>
            <person name="Colomb E."/>
            <person name="Kaplan J."/>
            <person name="Garchon H.-J."/>
        </authorList>
    </citation>
    <scope>VARIANTS GLC3A LYS-229; ARG-232; LYS-387; SER-390; SER-399 AND TYR-423</scope>
    <scope>VARIANTS GLY-48; SER-119; VAL-432 AND SER-453</scope>
</reference>
<reference key="38">
    <citation type="journal article" date="2003" name="J. Med. Genet.">
        <title>CYP1B1 gene analysis in primary congenital glaucoma in Indonesian and European patients.</title>
        <authorList>
            <person name="Sitorus R."/>
            <person name="Ardjo S.M."/>
            <person name="Lorenz B."/>
            <person name="Preising M."/>
        </authorList>
    </citation>
    <scope>VARIANTS GLC3A ILE-215; 355-ARG--ALA-358 DEL AND MET-364</scope>
    <scope>VARIANTS GLY-48; SER-119; VAL-432 AND SER-453</scope>
</reference>
<reference key="39">
    <citation type="journal article" date="2004" name="J. Med. Genet.">
        <title>CYP1B1 mutations in French patients with early-onset primary open-angle glaucoma.</title>
        <authorList>
            <person name="Melki R."/>
            <person name="Colomb E."/>
            <person name="Lefort N."/>
            <person name="Brezin A.P."/>
            <person name="Garchon H.-J."/>
        </authorList>
    </citation>
    <scope>VARIANTS GLC3A ASN-81; LYS-229; ARG-232; 269-SER--PHE-271 DEL; LYS-387; HIS-390; TYR-423 AND GLY-443</scope>
    <scope>VARIANTS GLY-48; SER-119; VAL-432 AND SER-453</scope>
</reference>
<reference key="40">
    <citation type="journal article" date="2004" name="Mol. Vis.">
        <title>Mutation spectrum of the CYP1B1 gene in Indian primary congenital glaucoma patients.</title>
        <authorList>
            <person name="Reddy A.B.M."/>
            <person name="Kaur K."/>
            <person name="Mandal A.K."/>
            <person name="Panicker S.G."/>
            <person name="Thomas R."/>
            <person name="Hasnain S.E."/>
            <person name="Balasubramanian D."/>
            <person name="Chakrabarti S."/>
        </authorList>
    </citation>
    <scope>VARIANTS GLC3A PRO-77; PRO-115; ARG-132; PRO-144; LEU-193; LYS-229; ARG-239; HIS-368; HIS-390; CYS-390; LEU-437 AND ASP-466</scope>
    <scope>VARIANTS GLY-48; SER-119; VAL-432 AND SER-453</scope>
</reference>
<reference key="41">
    <citation type="journal article" date="2004" name="Ophthalmic Genet.">
        <title>Cytochrome P4501B1 mutations cause only part of primary congenital glaucoma in Ecuador.</title>
        <authorList>
            <person name="Curry S.M."/>
            <person name="Daou A.G."/>
            <person name="Hermanns P."/>
            <person name="Molinari A."/>
            <person name="Lewis R.A."/>
            <person name="Bejjani B.A."/>
        </authorList>
    </citation>
    <scope>VARIANT GLC3A CYS-390</scope>
</reference>
<reference key="42">
    <citation type="journal article" date="2006" name="Am. J. Ophthalmol.">
        <title>Molecular and clinical evaluation of primary congenital glaucoma in Kuwait.</title>
        <authorList>
            <person name="Alfadhli S."/>
            <person name="Behbehani A."/>
            <person name="Elshafey A."/>
            <person name="Abdelmoaty S."/>
            <person name="Al-Awadi S."/>
        </authorList>
    </citation>
    <scope>VARIANTS GLC3A GLU-61; HIS-368 AND THR-388</scope>
    <scope>VARIANT GLY-422</scope>
</reference>
<reference key="43">
    <citation type="journal article" date="2006" name="Mol. Vis.">
        <title>Primary role of CYP1B1 in Indian juvenile-onset POAG patients.</title>
        <authorList>
            <person name="Acharya M."/>
            <person name="Mookherjee S."/>
            <person name="Bhattacharjee A."/>
            <person name="Bandyopadhyay A.K."/>
            <person name="Daulat Thakur S.K."/>
            <person name="Bhaduri G."/>
            <person name="Sen A."/>
            <person name="Ray K."/>
        </authorList>
    </citation>
    <scope>VARIANTS GLC3A CYS-57; LYS-229; HIS-368; LEU-515; THR-523 AND GLY-530</scope>
    <scope>VARIANTS GLY-48; SER-119; VAL-432; SER-453 AND ALA-518</scope>
</reference>
<reference key="44">
    <citation type="journal article" date="2006" name="Mol. Vis.">
        <title>Primary congenital glaucoma and Rieger's anomaly: extended haplotypes reveal founder effects for eight distinct CYP1B1 mutations.</title>
        <authorList>
            <person name="Chavarria-Soley G."/>
            <person name="Michels-Rautenstrauss K."/>
            <person name="Pasutto F."/>
            <person name="Flikier D."/>
            <person name="Flikier P."/>
            <person name="Cirak S."/>
            <person name="Bejjani B."/>
            <person name="Winters D.L."/>
            <person name="Lewis R.A."/>
            <person name="Mardin C."/>
            <person name="Reis A."/>
            <person name="Rautenstrauss B."/>
        </authorList>
    </citation>
    <scope>VARIANTS GLC3A GLU-61; ASN-81; LYS-229; LEU-343 DEL; HIS-368; LYS-387 AND TRP-469</scope>
</reference>
<reference key="45">
    <citation type="journal article" date="2006" name="Mol. Vis.">
        <title>Heterozygous CYP1B1 gene mutations in Spanish patients with primary open-angle glaucoma.</title>
        <authorList>
            <person name="Lopez-Garrido M.-P."/>
            <person name="Sanchez-Sanchez F."/>
            <person name="Lopez-Martinez F."/>
            <person name="Aroca-Aguilar J.-D."/>
            <person name="Blanco-Marchite C."/>
            <person name="Coca-Prados M."/>
            <person name="Escribano J."/>
        </authorList>
    </citation>
    <scope>VARIANTS GLC3A TRP-28; GLU-61; ASN-81; TRP-145; LYS-229; PHE-409 AND GLY-443</scope>
    <scope>VARIANTS LEU-52; HIS-144; PRO-189 AND SER-330</scope>
</reference>
<reference key="46">
    <citation type="journal article" date="2008" name="Hum. Mutat.">
        <title>Mutations in CYP1B1 cause primary congenital glaucoma by reduction of either activity or abundance of the enzyme.</title>
        <authorList>
            <person name="Chavarria-Soley G."/>
            <person name="Sticht H."/>
            <person name="Aklillu E."/>
            <person name="Ingelman-Sundberg M."/>
            <person name="Pasutto F."/>
            <person name="Reis A."/>
            <person name="Rautenstrauss B."/>
        </authorList>
    </citation>
    <scope>CHARACTERIZATION OF VARIANTS GLC3A GLU-61; ASN-81; SER-203; LYS-229 AND LEU-343 DEL</scope>
</reference>
<gene>
    <name evidence="43 52" type="primary">CYP1B1</name>
</gene>
<feature type="chain" id="PRO_0000051660" description="Cytochrome P450 1B1">
    <location>
        <begin position="1"/>
        <end position="543"/>
    </location>
</feature>
<feature type="binding site" description="axial binding residue" evidence="31 53">
    <location>
        <position position="470"/>
    </location>
    <ligand>
        <name>heme</name>
        <dbReference type="ChEBI" id="CHEBI:30413"/>
    </ligand>
    <ligandPart>
        <name>Fe</name>
        <dbReference type="ChEBI" id="CHEBI:18248"/>
    </ligandPart>
</feature>
<feature type="site" description="Major determinant of CYP1B1 17beta-estradiol hydroxylation regiospecificity">
    <location>
        <position position="395"/>
    </location>
</feature>
<feature type="sequence variant" id="VAR_054227" description="In GLC3A; dbSNP:rs780002791." evidence="26">
    <original>S</original>
    <variation>W</variation>
    <location>
        <position position="28"/>
    </location>
</feature>
<feature type="sequence variant" id="VAR_011752" description="In allele CYP1B1*2, allele CYP1B1*5, allele CYP1B1*6 and allele CYP1B1*7; dbSNP:rs10012." evidence="4 9 12 13 14 15 17 21 22 24 40 41">
    <original>R</original>
    <variation>G</variation>
    <location>
        <position position="48"/>
    </location>
</feature>
<feature type="sequence variant" id="VAR_054228" description="In dbSNP:rs201824781." evidence="26">
    <original>P</original>
    <variation>L</variation>
    <location>
        <position position="52"/>
    </location>
</feature>
<feature type="sequence variant" id="VAR_008350" description="In GLC3A; juvenile onset; allele CYP1B1*11; dbSNP:rs72549387." evidence="24 37">
    <original>W</original>
    <variation>C</variation>
    <location>
        <position position="57"/>
    </location>
</feature>
<feature type="sequence variant" id="VAR_001244" description="In GLC3A; allele CYP1B1*12; reduces enzymatic activity; dbSNP:rs28936700." evidence="4 13 23 25 26 27 36 37">
    <original>G</original>
    <variation>E</variation>
    <location>
        <position position="61"/>
    </location>
</feature>
<feature type="sequence variant" id="VAR_028735" description="In dbSNP:rs9282670.">
    <original>Q</original>
    <variation>R</variation>
    <location>
        <position position="68"/>
    </location>
</feature>
<feature type="sequence variant" id="VAR_054229" description="In GLC3A." evidence="4 22">
    <original>L</original>
    <variation>P</variation>
    <location>
        <position position="77"/>
    </location>
</feature>
<feature type="sequence variant" id="VAR_028736" description="In GLC3A; adult-onset; hypomorphic allele; reduces the abundance of the enzyme; dbSNP:rs9282671." evidence="21 25 26 27">
    <original>Y</original>
    <variation>N</variation>
    <location>
        <position position="81"/>
    </location>
</feature>
<feature type="sequence variant" id="VAR_054230" description="In GLC3A; dbSNP:rs764338357." evidence="22">
    <original>A</original>
    <variation>P</variation>
    <location>
        <position position="115"/>
    </location>
</feature>
<feature type="sequence variant" id="VAR_011753" description="In allele CYP1B1*2, allele CYP1B1*6 and allele CYP1B1*7; significantly associated with breast or lung cancer; no significant change in 17beta-estradiol 2- and 4-hydroxylation activities and 17beta-estradiol affinity; 1.5-fold reduction in testosterone affinity but nearly no change in testosterone 6beta-hydroxylation activity; 2-fold increase in progesterone 6beta- and 16alpha-hydroxylation activities and 5-fold reduction in progesterone affinity; dbSNP:rs1056827." evidence="3 4 6 9 12 14 15 17 22 24 40">
    <original>A</original>
    <variation>S</variation>
    <location>
        <position position="119"/>
    </location>
</feature>
<feature type="sequence variant" id="VAR_054231" description="In GLC3A." evidence="22">
    <original>M</original>
    <variation>R</variation>
    <location>
        <position position="132"/>
    </location>
</feature>
<feature type="sequence variant" id="VAR_054232" evidence="26">
    <original>Q</original>
    <variation>H</variation>
    <location>
        <position position="144"/>
    </location>
</feature>
<feature type="sequence variant" id="VAR_054233" description="In GLC3A." evidence="22">
    <original>Q</original>
    <variation>P</variation>
    <location>
        <position position="144"/>
    </location>
</feature>
<feature type="sequence variant" id="VAR_054234" description="In GLC3A; dbSNP:rs753847648." evidence="18">
    <original>Q</original>
    <variation>R</variation>
    <location>
        <position position="144"/>
    </location>
</feature>
<feature type="sequence variant" id="VAR_054235" description="In GLC3A." evidence="26">
    <original>R</original>
    <variation>W</variation>
    <location>
        <position position="145"/>
    </location>
</feature>
<feature type="sequence variant" id="VAR_054236" evidence="13">
    <original>G</original>
    <variation>S</variation>
    <location>
        <position position="184"/>
    </location>
</feature>
<feature type="sequence variant" id="VAR_054237" description="Associated with ocular hypertension susceptibility; dbSNP:rs1326854156." evidence="26">
    <original>A</original>
    <variation>P</variation>
    <location>
        <position position="189"/>
    </location>
</feature>
<feature type="sequence variant" id="VAR_054238" description="In GLC3A." evidence="9">
    <original>D</original>
    <variation>V</variation>
    <location>
        <position position="192"/>
    </location>
</feature>
<feature type="sequence variant" id="VAR_054239" description="In GLC3A; dbSNP:rs529769268." evidence="13 22">
    <original>P</original>
    <variation>L</variation>
    <location>
        <position position="193"/>
    </location>
</feature>
<feature type="sequence variant" id="VAR_054240" description="In GLC3A; dbSNP:rs59472972." evidence="9">
    <original>V</original>
    <variation>I</variation>
    <location>
        <position position="198"/>
    </location>
</feature>
<feature type="sequence variant" id="VAR_054241" description="In GLC3A; reduces enzymatic activity; dbSNP:rs1426636145." evidence="27">
    <original>N</original>
    <variation>S</variation>
    <location>
        <position position="203"/>
    </location>
</feature>
<feature type="sequence variant" id="VAR_018869" description="In dbSNP:rs9341248." evidence="40">
    <original>S</original>
    <variation>N</variation>
    <location>
        <position position="206"/>
    </location>
</feature>
<feature type="sequence variant" id="VAR_054242" description="In GLC3A; dbSNP:rs72549384." evidence="15">
    <original>S</original>
    <variation>I</variation>
    <location>
        <position position="215"/>
    </location>
</feature>
<feature type="sequence variant" id="VAR_054243" description="In GLC3A; juvenile-onset; hypomorphic allele; reduces the abundance of the enzyme; dbSNP:rs57865060." evidence="13 17 21 22 24 25 26 27">
    <original>E</original>
    <variation>K</variation>
    <location>
        <position position="229"/>
    </location>
</feature>
<feature type="sequence variant" id="VAR_054244" description="In GLC3A; adult-onset; dbSNP:rs104893628." evidence="17 21">
    <original>G</original>
    <variation>R</variation>
    <location>
        <position position="232"/>
    </location>
</feature>
<feature type="sequence variant" id="VAR_054245" description="In GLC3A." evidence="22">
    <original>S</original>
    <variation>R</variation>
    <location>
        <position position="239"/>
    </location>
</feature>
<feature type="sequence variant" id="VAR_018870" description="In dbSNP:rs9341250." evidence="40">
    <original>R</original>
    <variation>L</variation>
    <location>
        <position position="266"/>
    </location>
</feature>
<feature type="sequence variant" id="VAR_054246" description="In GLC3A." evidence="4">
    <location>
        <begin position="269"/>
        <end position="271"/>
    </location>
</feature>
<feature type="sequence variant" id="VAR_054247" description="In GLC3A; uncertain significance; dbSNP:rs72549382." evidence="9">
    <original>V</original>
    <variation>L</variation>
    <location>
        <position position="320"/>
    </location>
</feature>
<feature type="sequence variant" id="VAR_054248" description="In GLC3A; uncertain significance; requires 2 nucleotide substitutions." evidence="9">
    <original>A</original>
    <variation>F</variation>
    <location>
        <position position="330"/>
    </location>
</feature>
<feature type="sequence variant" id="VAR_054249" description="Associated with ocular hypertension susceptibility; dbSNP:rs752456881." evidence="26">
    <original>A</original>
    <variation>S</variation>
    <location>
        <position position="330"/>
    </location>
</feature>
<feature type="sequence variant" id="VAR_054250" description="In GLC3A; reduces enzymatic activity and also the abundance of the enzyme." evidence="25 27">
    <location>
        <position position="343"/>
    </location>
</feature>
<feature type="sequence variant" id="VAR_054251" description="In GLC3A; dbSNP:rs66583685." evidence="11">
    <original>L</original>
    <variation>F</variation>
    <location>
        <position position="345"/>
    </location>
</feature>
<feature type="sequence variant" id="VAR_054252" description="In GLC3A." evidence="15">
    <location>
        <begin position="355"/>
        <end position="358"/>
    </location>
</feature>
<feature type="sequence variant" id="VAR_054253" description="In GLC3A; dbSNP:rs72549379." evidence="7 9 15">
    <original>V</original>
    <variation>M</variation>
    <location>
        <position position="364"/>
    </location>
</feature>
<feature type="sequence variant" id="VAR_001245" description="In GLC3A; allele CYP1B1*18; dbSNP:rs55771538." evidence="37">
    <original>G</original>
    <variation>W</variation>
    <location>
        <position position="365"/>
    </location>
</feature>
<feature type="sequence variant" id="VAR_016034" description="In GLC3A and GLC1A; acts as a GLC1A disease modifier in patients also carrying Val-399 mutation in MYOC; dbSNP:rs79204362." evidence="4 11 13 14 22 23 24 25">
    <original>R</original>
    <variation>H</variation>
    <location>
        <position position="368"/>
    </location>
</feature>
<feature type="sequence variant" id="VAR_001246" description="In GLC3A; dbSNP:rs104893622." evidence="4 36">
    <original>D</original>
    <variation>N</variation>
    <location>
        <position position="374"/>
    </location>
</feature>
<feature type="sequence variant" id="VAR_008351" description="In allele CYP1B1*19; dbSNP:rs56305281." evidence="37">
    <original>P</original>
    <variation>L</variation>
    <location>
        <position position="379"/>
    </location>
</feature>
<feature type="sequence variant" id="VAR_008352" description="In GLC3A; allele CYP1B1*20; dbSNP:rs55989760." evidence="2 14 17 21 25 37">
    <original>E</original>
    <variation>K</variation>
    <location>
        <position position="387"/>
    </location>
</feature>
<feature type="sequence variant" id="VAR_054254" description="In GLC3A." evidence="23">
    <original>A</original>
    <variation>T</variation>
    <location>
        <position position="388"/>
    </location>
</feature>
<feature type="sequence variant" id="VAR_054255" description="In GLC3A; dbSNP:rs148542782." evidence="19 22">
    <original>R</original>
    <variation>C</variation>
    <location>
        <position position="390"/>
    </location>
</feature>
<feature type="sequence variant" id="VAR_008353" description="In GLC3A; allele CYP1B1*21; dbSNP:rs56010818." evidence="21 22 37">
    <original>R</original>
    <variation>H</variation>
    <location>
        <position position="390"/>
    </location>
</feature>
<feature type="sequence variant" id="VAR_054256" description="In GLC3A; dbSNP:rs148542782." evidence="4 17">
    <original>R</original>
    <variation>S</variation>
    <location>
        <position position="390"/>
    </location>
</feature>
<feature type="sequence variant" id="VAR_054257" description="In GLC3A; dbSNP:rs72549378." evidence="17">
    <original>I</original>
    <variation>S</variation>
    <location>
        <position position="399"/>
    </location>
</feature>
<feature type="sequence variant" id="VAR_054258" description="In GLC3A; dbSNP:rs957253424." evidence="26">
    <original>V</original>
    <variation>F</variation>
    <location>
        <position position="409"/>
    </location>
</feature>
<feature type="sequence variant" id="VAR_054259" evidence="23">
    <original>V</original>
    <variation>G</variation>
    <location>
        <position position="422"/>
    </location>
</feature>
<feature type="sequence variant" id="VAR_054260" description="In GLC3A; juvenile-onset; dbSNP:rs104893629." evidence="17 21">
    <original>N</original>
    <variation>Y</variation>
    <location>
        <position position="423"/>
    </location>
</feature>
<feature type="sequence variant" id="VAR_001248" description="In allele CYP1B1*3, allele CYP1B1*5, allele CYP1B1*6 and allele CYP1B1*7; 1.6-fold increase in 17beta-estradiol 4-hydroxylation activity but no change in 17beta-estradiol 2-hydroxylation activity; 2-fold reduction in testosterone 6beta-hydroxylation activity and 3-fold reduction in testosterone affinity; 6-fold and 4-fold increase in progesterone 6beta- and 16alpha-hydroxylation activity, respectively and 7-fold reduction in progesterone affinity; dbSNP:rs1056836." evidence="3 4 6 9 11 12 13 14 15 17 21 22 24 37 38 40">
    <original>L</original>
    <variation>V</variation>
    <location>
        <position position="432"/>
    </location>
</feature>
<feature type="sequence variant" id="VAR_008354" description="In GLC3A; allele CYP1B1*23; dbSNP:rs56175199." evidence="14 22 37">
    <original>P</original>
    <variation>L</variation>
    <location>
        <position position="437"/>
    </location>
</feature>
<feature type="sequence variant" id="VAR_028737" description="In dbSNP:rs4986887.">
    <original>D</original>
    <variation>H</variation>
    <location>
        <position position="441"/>
    </location>
</feature>
<feature type="sequence variant" id="VAR_018774" description="In GLC3A; uncertain significance; allele CYP1B1*7; dbSNP:rs4986888." evidence="12 14 21 26">
    <original>A</original>
    <variation>G</variation>
    <location>
        <position position="443"/>
    </location>
</feature>
<feature type="sequence variant" id="VAR_054261" description="In GLC3A; dbSNP:rs72549376." evidence="9">
    <original>R</original>
    <variation>Q</variation>
    <location>
        <position position="444"/>
    </location>
</feature>
<feature type="sequence variant" id="VAR_054262" description="In GLC3A." evidence="18">
    <original>F</original>
    <variation>C</variation>
    <location>
        <position position="445"/>
    </location>
</feature>
<feature type="sequence variant" id="VAR_028738" description="In dbSNP:rs1056837.">
    <original>D</original>
    <variation>E</variation>
    <location>
        <position position="449"/>
    </location>
</feature>
<feature type="sequence variant" id="VAR_008355" description="In allele CYP1B1*4; dbSNP:rs1800440." evidence="4 12 14 15 17 21 22 24 38 39 40">
    <original>N</original>
    <variation>S</variation>
    <location>
        <position position="453"/>
    </location>
</feature>
<feature type="sequence variant" id="VAR_054263" description="In GLC3A; dbSNP:rs868208502." evidence="22">
    <original>G</original>
    <variation>D</variation>
    <location>
        <position position="466"/>
    </location>
</feature>
<feature type="sequence variant" id="VAR_001247" description="In GLC3A; allele CYP1B1*25; dbSNP:rs28936701." evidence="4 25 36 37">
    <original>R</original>
    <variation>W</variation>
    <location>
        <position position="469"/>
    </location>
</feature>
<feature type="sequence variant" id="VAR_054264" description="In GLC3A; dbSNP:rs72549372." evidence="9">
    <original>E</original>
    <variation>G</variation>
    <location>
        <position position="499"/>
    </location>
</feature>
<feature type="sequence variant" id="VAR_054265" description="In GLC3A; uncertain significance." evidence="24">
    <original>S</original>
    <variation>L</variation>
    <location>
        <position position="515"/>
    </location>
</feature>
<feature type="sequence variant" id="VAR_054266" evidence="24">
    <original>V</original>
    <variation>A</variation>
    <location>
        <position position="518"/>
    </location>
</feature>
<feature type="sequence variant" id="VAR_054267" description="In GLC3A; juvenile-onset." evidence="24">
    <original>R</original>
    <variation>T</variation>
    <location>
        <position position="523"/>
    </location>
</feature>
<feature type="sequence variant" id="VAR_054268" description="In GLC3A." evidence="24">
    <original>D</original>
    <variation>G</variation>
    <location>
        <position position="530"/>
    </location>
</feature>
<feature type="mutagenesis site" description="Invertes the 4OH E2:2OH E2 hydroxylation preference from 5.1 to 0.45." evidence="34">
    <original>V</original>
    <variation>L</variation>
    <location>
        <position position="395"/>
    </location>
</feature>
<feature type="helix" evidence="54">
    <location>
        <begin position="70"/>
        <end position="81"/>
    </location>
</feature>
<feature type="strand" evidence="54">
    <location>
        <begin position="83"/>
        <end position="89"/>
    </location>
</feature>
<feature type="strand" evidence="54">
    <location>
        <begin position="92"/>
        <end position="97"/>
    </location>
</feature>
<feature type="helix" evidence="54">
    <location>
        <begin position="100"/>
        <end position="107"/>
    </location>
</feature>
<feature type="turn" evidence="54">
    <location>
        <begin position="108"/>
        <end position="113"/>
    </location>
</feature>
<feature type="helix" evidence="54">
    <location>
        <begin position="121"/>
        <end position="125"/>
    </location>
</feature>
<feature type="helix" evidence="54">
    <location>
        <begin position="126"/>
        <end position="129"/>
    </location>
</feature>
<feature type="strand" evidence="54">
    <location>
        <begin position="132"/>
        <end position="135"/>
    </location>
</feature>
<feature type="helix" evidence="54">
    <location>
        <begin position="139"/>
        <end position="154"/>
    </location>
</feature>
<feature type="helix" evidence="54">
    <location>
        <begin position="162"/>
        <end position="183"/>
    </location>
</feature>
<feature type="helix" evidence="54">
    <location>
        <begin position="184"/>
        <end position="188"/>
    </location>
</feature>
<feature type="helix" evidence="54">
    <location>
        <begin position="194"/>
        <end position="209"/>
    </location>
</feature>
<feature type="helix" evidence="54">
    <location>
        <begin position="219"/>
        <end position="224"/>
    </location>
</feature>
<feature type="helix" evidence="54">
    <location>
        <begin position="228"/>
        <end position="235"/>
    </location>
</feature>
<feature type="turn" evidence="54">
    <location>
        <begin position="241"/>
        <end position="243"/>
    </location>
</feature>
<feature type="helix" evidence="54">
    <location>
        <begin position="245"/>
        <end position="249"/>
    </location>
</feature>
<feature type="helix" evidence="54">
    <location>
        <begin position="253"/>
        <end position="282"/>
    </location>
</feature>
<feature type="helix" evidence="54">
    <location>
        <begin position="292"/>
        <end position="304"/>
    </location>
</feature>
<feature type="helix" evidence="54">
    <location>
        <begin position="317"/>
        <end position="319"/>
    </location>
</feature>
<feature type="helix" evidence="54">
    <location>
        <begin position="320"/>
        <end position="348"/>
    </location>
</feature>
<feature type="helix" evidence="54">
    <location>
        <begin position="350"/>
        <end position="363"/>
    </location>
</feature>
<feature type="helix" evidence="54">
    <location>
        <begin position="372"/>
        <end position="377"/>
    </location>
</feature>
<feature type="helix" evidence="54">
    <location>
        <begin position="379"/>
        <end position="392"/>
    </location>
</feature>
<feature type="strand" evidence="54">
    <location>
        <begin position="407"/>
        <end position="409"/>
    </location>
</feature>
<feature type="strand" evidence="54">
    <location>
        <begin position="412"/>
        <end position="414"/>
    </location>
</feature>
<feature type="strand" evidence="54">
    <location>
        <begin position="419"/>
        <end position="424"/>
    </location>
</feature>
<feature type="helix" evidence="54">
    <location>
        <begin position="425"/>
        <end position="428"/>
    </location>
</feature>
<feature type="turn" evidence="54">
    <location>
        <begin position="431"/>
        <end position="433"/>
    </location>
</feature>
<feature type="strand" evidence="54">
    <location>
        <begin position="435"/>
        <end position="439"/>
    </location>
</feature>
<feature type="helix" evidence="54">
    <location>
        <begin position="442"/>
        <end position="445"/>
    </location>
</feature>
<feature type="helix" evidence="54">
    <location>
        <begin position="454"/>
        <end position="457"/>
    </location>
</feature>
<feature type="helix" evidence="54">
    <location>
        <begin position="473"/>
        <end position="490"/>
    </location>
</feature>
<feature type="strand" evidence="54">
    <location>
        <begin position="491"/>
        <end position="495"/>
    </location>
</feature>
<feature type="strand" evidence="54">
    <location>
        <begin position="505"/>
        <end position="513"/>
    </location>
</feature>
<feature type="strand" evidence="54">
    <location>
        <begin position="518"/>
        <end position="524"/>
    </location>
</feature>
<sequence length="543" mass="60846">MGTSLSPNDPWPLNPLSIQQTTLLLLLSVLATVHVGQRLLRQRRRQLRSAPPGPFAWPLIGNAAAVGQAAHLSFARLARRYGDVFQIRLGSCPIVVLNGERAIHQALVQQGSAFADRPAFASFRVVSGGRSMAFGHYSEHWKVQRRAAHSMMRNFFTRQPRSRQVLEGHVLSEARELVALLVRGSADGAFLDPRPLTVVAVANVMSAVCFGCRYSHDDPEFRELLSHNEEFGRTVGAGSLVDVMPWLQYFPNPVRTVFREFEQLNRNFSNFILDKFLRHCESLRPGAAPRDMMDAFILSAEKKAAGDSHGGGARLDLENVPATITDIFGASQDTLSTALQWLLLLFTRYPDVQTRVQAELDQVVGRDRLPCMGDQPNLPYVLAFLYEAMRFSSFVPVTIPHATTANTSVLGYHIPKDTVVFVNQWSVNHDPLKWPNPENFDPARFLDKDGLINKDLTSRVMIFSVGKRRCIGEELSKMQLFLFISILAHQCDFRANPNEPAKMNFSYGLTIKPKSFKVNVTLRESMELLDSAVQNLQAKETCQ</sequence>
<organism>
    <name type="scientific">Homo sapiens</name>
    <name type="common">Human</name>
    <dbReference type="NCBI Taxonomy" id="9606"/>
    <lineage>
        <taxon>Eukaryota</taxon>
        <taxon>Metazoa</taxon>
        <taxon>Chordata</taxon>
        <taxon>Craniata</taxon>
        <taxon>Vertebrata</taxon>
        <taxon>Euteleostomi</taxon>
        <taxon>Mammalia</taxon>
        <taxon>Eutheria</taxon>
        <taxon>Euarchontoglires</taxon>
        <taxon>Primates</taxon>
        <taxon>Haplorrhini</taxon>
        <taxon>Catarrhini</taxon>
        <taxon>Hominidae</taxon>
        <taxon>Homo</taxon>
    </lineage>
</organism>
<name>CP1B1_HUMAN</name>